<keyword id="KW-0007">Acetylation</keyword>
<keyword id="KW-1072">Activation of host autophagy by virus</keyword>
<keyword id="KW-0053">Apoptosis</keyword>
<keyword id="KW-0067">ATP-binding</keyword>
<keyword id="KW-0167">Capsid protein</keyword>
<keyword id="KW-1165">Clathrin-mediated endocytosis of virus by host</keyword>
<keyword id="KW-1015">Disulfide bond</keyword>
<keyword id="KW-1170">Fusion of virus membrane with host endosomal membrane</keyword>
<keyword id="KW-1168">Fusion of virus membrane with host membrane</keyword>
<keyword id="KW-1078">G1/S host cell cycle checkpoint dysregulation by virus</keyword>
<keyword id="KW-0325">Glycoprotein</keyword>
<keyword id="KW-0347">Helicase</keyword>
<keyword id="KW-1032">Host cell membrane</keyword>
<keyword id="KW-1035">Host cytoplasm</keyword>
<keyword id="KW-1038">Host endoplasmic reticulum</keyword>
<keyword id="KW-1041">Host lipid droplet</keyword>
<keyword id="KW-1043">Host membrane</keyword>
<keyword id="KW-1045">Host mitochondrion</keyword>
<keyword id="KW-1048">Host nucleus</keyword>
<keyword id="KW-0945">Host-virus interaction</keyword>
<keyword id="KW-0378">Hydrolase</keyword>
<keyword id="KW-1090">Inhibition of host innate immune response by virus</keyword>
<keyword id="KW-1114">Inhibition of host interferon signaling pathway by virus</keyword>
<keyword id="KW-1097">Inhibition of host MAVS by virus</keyword>
<keyword id="KW-1113">Inhibition of host RLR pathway by virus</keyword>
<keyword id="KW-1105">Inhibition of host STAT1 by virus</keyword>
<keyword id="KW-1110">Inhibition of host TRAFs by virus</keyword>
<keyword id="KW-0922">Interferon antiviral system evasion</keyword>
<keyword id="KW-0407">Ion channel</keyword>
<keyword id="KW-0406">Ion transport</keyword>
<keyword id="KW-1017">Isopeptide bond</keyword>
<keyword id="KW-0449">Lipoprotein</keyword>
<keyword id="KW-0460">Magnesium</keyword>
<keyword id="KW-0472">Membrane</keyword>
<keyword id="KW-0479">Metal-binding</keyword>
<keyword id="KW-1121">Modulation of host cell cycle by virus</keyword>
<keyword id="KW-0511">Multifunctional enzyme</keyword>
<keyword id="KW-0547">Nucleotide-binding</keyword>
<keyword id="KW-0548">Nucleotidyltransferase</keyword>
<keyword id="KW-0553">Oncogene</keyword>
<keyword id="KW-0564">Palmitate</keyword>
<keyword id="KW-0597">Phosphoprotein</keyword>
<keyword id="KW-0645">Protease</keyword>
<keyword id="KW-0687">Ribonucleoprotein</keyword>
<keyword id="KW-0694">RNA-binding</keyword>
<keyword id="KW-0696">RNA-directed RNA polymerase</keyword>
<keyword id="KW-0720">Serine protease</keyword>
<keyword id="KW-0729">SH3-binding</keyword>
<keyword id="KW-0788">Thiol protease</keyword>
<keyword id="KW-0804">Transcription</keyword>
<keyword id="KW-0805">Transcription regulation</keyword>
<keyword id="KW-0808">Transferase</keyword>
<keyword id="KW-0812">Transmembrane</keyword>
<keyword id="KW-1133">Transmembrane helix</keyword>
<keyword id="KW-0813">Transport</keyword>
<keyword id="KW-0832">Ubl conjugation</keyword>
<keyword id="KW-1161">Viral attachment to host cell</keyword>
<keyword id="KW-0261">Viral envelope protein</keyword>
<keyword id="KW-0899">Viral immunoevasion</keyword>
<keyword id="KW-1182">Viral ion channel</keyword>
<keyword id="KW-0543">Viral nucleoprotein</keyword>
<keyword id="KW-1162">Viral penetration into host cytoplasm</keyword>
<keyword id="KW-0693">Viral RNA replication</keyword>
<keyword id="KW-0946">Virion</keyword>
<keyword id="KW-1164">Virus endocytosis by host</keyword>
<keyword id="KW-1160">Virus entry into host cell</keyword>
<keyword id="KW-0862">Zinc</keyword>
<comment type="function">
    <molecule>Mature core protein</molecule>
    <text evidence="2 4 5 6 11 19">Packages viral RNA to form a viral nucleocapsid, and promotes virion budding (Probable). Participates in the viral particle production as a result of its interaction with the non-structural protein 5A (By similarity). Binds RNA and may function as a RNA chaperone to induce the RNA structural rearrangements taking place during virus replication (By similarity). Modulates viral translation initiation by interacting with viral IRES and 40S ribosomal subunit (By similarity). Affects various cell signaling pathways, host immunity and lipid metabolism (Probable). Prevents the establishment of cellular antiviral state by blocking the interferon-alpha/beta (IFN-alpha/beta) and IFN-gamma signaling pathways and by blocking the formation of phosphorylated STAT1 and promoting ubiquitin-mediated proteasome-dependent degradation of STAT1 (By similarity). Activates STAT3 leading to cellular transformation (By similarity). Regulates the activity of cellular genes, including c-myc and c-fos (By similarity). May repress the promoter of p53, and sequester CREB3 and SP110 isoform 3/Sp110b in the cytoplasm (By similarity). Represses cell cycle negative regulating factor CDKN1A, thereby interrupting an important check point of normal cell cycle regulation (By similarity). Targets transcription factors involved in the regulation of inflammatory responses and in the immune response: suppresses TNF-induced NF-kappa-B activation, and activates AP-1 (By similarity). Binds to dendritic cells (DCs) via C1QR1, resulting in down-regulation of T-lymphocytes proliferation (By similarity). Alters lipid metabolism by interacting with hepatocellular proteins involved in lipid accumulation and storage (By similarity). Induces up-regulation of FAS promoter activity, and thereby contributes to the increased triglyceride accumulation in hepatocytes (steatosis) (By similarity).</text>
</comment>
<comment type="function">
    <molecule>Envelope glycoprotein E1</molecule>
    <text evidence="5">Forms a heterodimer with envelope glycoprotein E2, which mediates virus attachment to the host cell, virion internalization through clathrin-dependent endocytosis and fusion with host membrane (By similarity). Fusion with the host cell is most likely mediated by both E1 and E2, through conformational rearrangements of the heterodimer required for fusion rather than a classical class II fusion mechanism (By similarity). E1/E2 heterodimer binds host apolipoproteins such as APOB and ApoE thereby forming a lipo-viro-particle (LVP) (By similarity). APOE associated to the LVP allows the initial virus attachment to cell surface receptors such as the heparan sulfate proteoglycans (HSPGs), syndecan-1 (SDC1), syndecan-1 (SDC2), the low-density lipoprotein receptor (LDLR) and scavenger receptor class B type I (SCARB1) (By similarity). The cholesterol transfer activity of SCARB1 allows E2 exposure and binding of E2 to SCARB1 and the tetraspanin CD81 (By similarity). E1/E2 heterodimer binding on CD81 activates the epithelial growth factor receptor (EGFR) signaling pathway (By similarity). Diffusion of the complex E1-E2-EGFR-SCARB1-CD81 to the cell lateral membrane allows further interaction with Claudin 1 (CLDN1) and occludin (OCLN) to finally trigger HCV entry (By similarity).</text>
</comment>
<comment type="function">
    <molecule>Envelope glycoprotein E2</molecule>
    <text evidence="4 5">Forms a heterodimer with envelope glycoprotein E1, which mediates virus attachment to the host cell, virion internalization through clathrin-dependent endocytosis and fusion with host membrane (By similarity). Fusion with the host cell is most likely mediated by both E1 and E2, through conformational rearrangements of the heterodimer required for fusion rather than a classical class II fusion mechanism (By similarity). The interaction between envelope glycoprotein E2 and host apolipoprotein E/APOE allows the proper assembly, maturation and infectivity of the viral particles (By similarity). This interaction is probably promoted via the up-regulation of cellular autophagy by the virus (By similarity). E1/E2 heterodimer binds host apolipoproteins such as APOB and APOE thereby forming a lipo-viro-particle (LVP) (By similarity). APOE associated to the LVP allows the initial virus attachment to cell surface receptors such as the heparan sulfate proteoglycans (HSPGs), syndecan-1 (SDC1), syndecan-1 (SDC2), the low-density lipoprotein receptor (LDLR) and scavenger receptor class B type I (SCARB1) (By similarity). The cholesterol transfer activity of SCARB1 allows E2 exposure and binding of E2 to SCARB1 and the tetraspanin CD81 (By similarity). E1/E2 heterodimer binding on CD81 activates the epithelial growth factor receptor (EGFR) signaling pathway (By similarity). Diffusion of the complex E1-E2-EGFR-SCARB1-CD81 to the cell lateral membrane allows further interaction with Claudin 1 (CLDN1) and occludin (OCLN) to finally trigger HCV entry (By similarity). Inhibits host EIF2AK2/PKR activation, preventing the establishment of an antiviral state (By similarity). Viral ligand for CD209/DC-SIGN and CLEC4M/DC-SIGNR, which are respectively found on dendritic cells (DCs), and on liver sinusoidal endothelial cells and macrophage-like cells of lymph node sinuses (By similarity). These interactions allow the capture of circulating HCV particles by these cells and subsequent facilitated transmission to permissive cells such as hepatocytes and lymphocyte subpopulations (By similarity). The interaction between E2 and host amino acid transporter complex formed by SLC3A2 and SLC7A5/LAT1 may facilitate viral entry into host cell (By similarity).</text>
</comment>
<comment type="function">
    <molecule>Viroporin p7</molecule>
    <text evidence="5 11 19">Ion channel protein that acts as a viroporin and plays an essential role in the assembly, envelopment and secretion of viral particles (By similarity). Regulates the host cell secretory pathway, which induces the intracellular retention of viral glycoproteins and favors assembly of viral particles (By similarity). Creates a pore in acidic organelles and releases Ca(2+) and H(+) in the cytoplasm of infected cells, leading to a productive viral infection (By similarity). High levels of cytoplasmic Ca(2+) may trigger membrane trafficking and transport of viral ER-associated proteins to viroplasms, sites of viral genome replication (Probable). This ionic imbalance induces the assembly of the inflammasome complex, which triggers the maturation of pro-IL-1beta into IL-1beta through the action of caspase-1 (By similarity). Targets also host mitochondria and induces mitochondrial depolarization (By similarity). In addition of its role as a viroporin, acts as a lipid raft adhesion factor (By similarity).</text>
</comment>
<comment type="function">
    <molecule>Protease NS2</molecule>
    <text evidence="3 5">Cysteine protease required for the proteolytic auto-cleavage between the non-structural proteins NS2 and NS3 (By similarity). The N-terminus of NS3 is required for the function of NS2 protease (active region NS2-3) (By similarity). Promotes the initiation of viral particle assembly by mediating the interaction between structural and non-structural proteins (By similarity).</text>
</comment>
<comment type="function">
    <molecule>Serine protease/helicase NS3</molecule>
    <text evidence="5 12">Displays three enzymatic activities: serine protease with a chymotrypsin-like fold, NTPase and RNA helicase (By similarity). NS3 serine protease, in association with NS4A, is responsible for the cleavages of NS3-NS4A, NS4A-NS4B, NS4B-NS5A and NS5A-NS5B (By similarity). The NS3/NS4A complex prevents phosphorylation of host IRF3, thus preventing the establishment of dsRNA induced antiviral state (By similarity). The NS3/NS4A complex induces host amino acid transporter component SLC3A2, thus contributing to HCV propagation (By similarity). NS3 RNA helicase binds to RNA and unwinds both dsDNA and dsRNA in the 3' to 5' direction, and likely resolves RNA complicated stable secondary structures in the template strand (By similarity). Binds a single ATP and catalyzes the unzipping of a single base pair of dsRNA (By similarity). Inhibits host antiviral proteins TBK1 and IRF3 thereby preventing the establishment of an antiviral state (By similarity). Cleaves host MAVS/CARDIF thereby preventing the establishment of an antiviral state (By similarity). Cleaves host TICAM1/TRIF, thereby disrupting TLR3 signaling and preventing the establishment of an antiviral state (By similarity).</text>
</comment>
<comment type="function">
    <molecule>Non-structural protein 4B</molecule>
    <text evidence="5">Induces a specific membrane alteration that serves as a scaffold for the virus replication complex (By similarity). This membrane alteration gives rise to the so-called ER-derived membranous web that contains the replication complex (By similarity). NS4B self-interaction contributes to its function in membranous web formation (By similarity). Promotes host TRIF protein degradation in a CASP8-dependent manner thereby inhibiting host TLR3-mediated interferon signaling (By similarity). Disrupts the interaction between STING and TBK1 contributing to the inhibition of interferon signaling (By similarity).</text>
</comment>
<comment type="function">
    <molecule>Non-structural protein 5A</molecule>
    <text evidence="2 4 5 11 12">Phosphorylated protein that is indispensable for viral replication and assembly (By similarity). Both hypo- and hyperphosphorylated states are required for the viral life cycle (By similarity). The hyperphosphorylated form of NS5A is an inhibitor of viral replication (By similarity). Involved in RNA-binding and especially in binding to the viral genome (By similarity). Zinc is essential for RNA-binding (By similarity). Participates in the viral particle production as a result of its interaction with the mature viral core protein (By similarity). Its interaction with host VAPB may target the viral replication complex to vesicles (By similarity). Down-regulates viral IRES translation initiation (By similarity). Mediates interferon resistance, presumably by interacting with and inhibiting host EIF2AK2/PKR (By similarity). Prevents BIN1-induced apoptosis (By similarity). Acts as a transcriptional activator of some host genes important for viral replication when localized in the nucleus (By similarity). Via the interaction with host PACSIN2, modulates lipid droplet formation in order to promote virion assembly (By similarity). Modulates TNFRSF21/DR6 signaling pathway for viral propagation (By similarity).</text>
</comment>
<comment type="function">
    <molecule>RNA-directed RNA polymerase</molecule>
    <text evidence="5">RNA-dependent RNA polymerase that performs primer-template recognition and RNA synthesis during viral replication. Initiates RNA transcription/replication at a flavin adenine dinucleotide (FAD), resulting in a 5'- FAD cap on viral RNAs. In this way, recognition of viral 5' RNA by host pattern recognition receptors can be bypassed, thereby evading activation of antiviral pathways.</text>
</comment>
<comment type="catalytic activity">
    <molecule>Serine protease/helicase NS3</molecule>
    <reaction evidence="5">
        <text>Hydrolysis of four peptide bonds in the viral precursor polyprotein, commonly with Asp or Glu in the P6 position, Cys or Thr in P1 and Ser or Ala in P1'.</text>
        <dbReference type="EC" id="3.4.21.98"/>
    </reaction>
</comment>
<comment type="catalytic activity">
    <molecule>Serine protease/helicase NS3</molecule>
    <reaction evidence="5">
        <text>a ribonucleoside 5'-triphosphate + H2O = a ribonucleoside 5'-diphosphate + phosphate + H(+)</text>
        <dbReference type="Rhea" id="RHEA:23680"/>
        <dbReference type="ChEBI" id="CHEBI:15377"/>
        <dbReference type="ChEBI" id="CHEBI:15378"/>
        <dbReference type="ChEBI" id="CHEBI:43474"/>
        <dbReference type="ChEBI" id="CHEBI:57930"/>
        <dbReference type="ChEBI" id="CHEBI:61557"/>
        <dbReference type="EC" id="3.6.1.15"/>
    </reaction>
</comment>
<comment type="catalytic activity">
    <molecule>Serine protease/helicase NS3</molecule>
    <reaction evidence="5">
        <text>ATP + H2O = ADP + phosphate + H(+)</text>
        <dbReference type="Rhea" id="RHEA:13065"/>
        <dbReference type="ChEBI" id="CHEBI:15377"/>
        <dbReference type="ChEBI" id="CHEBI:15378"/>
        <dbReference type="ChEBI" id="CHEBI:30616"/>
        <dbReference type="ChEBI" id="CHEBI:43474"/>
        <dbReference type="ChEBI" id="CHEBI:456216"/>
        <dbReference type="EC" id="3.6.4.13"/>
    </reaction>
</comment>
<comment type="catalytic activity">
    <molecule>RNA-directed RNA polymerase</molecule>
    <reaction evidence="14">
        <text>RNA(n) + a ribonucleoside 5'-triphosphate = RNA(n+1) + diphosphate</text>
        <dbReference type="Rhea" id="RHEA:21248"/>
        <dbReference type="Rhea" id="RHEA-COMP:14527"/>
        <dbReference type="Rhea" id="RHEA-COMP:17342"/>
        <dbReference type="ChEBI" id="CHEBI:33019"/>
        <dbReference type="ChEBI" id="CHEBI:61557"/>
        <dbReference type="ChEBI" id="CHEBI:140395"/>
        <dbReference type="EC" id="2.7.7.48"/>
    </reaction>
</comment>
<comment type="cofactor">
    <molecule>Protease NS2</molecule>
    <cofactor evidence="3">
        <name>Zn(2+)</name>
        <dbReference type="ChEBI" id="CHEBI:29105"/>
    </cofactor>
    <text evidence="3">Activity of protease NS2 is dependent on zinc ions and completely inhibited by EDTA. This is probably due to the fact that NS2 protease activity needs NS3 N-terminus that binds a zinc atom (active region NS2-3).</text>
</comment>
<comment type="cofactor">
    <molecule>Serine protease/helicase NS3</molecule>
    <cofactor evidence="3">
        <name>Zn(2+)</name>
        <dbReference type="ChEBI" id="CHEBI:29105"/>
    </cofactor>
    <cofactor evidence="12">
        <name>Mg(2+)</name>
        <dbReference type="ChEBI" id="CHEBI:18420"/>
    </cofactor>
    <text evidence="3 12">Binds 1 zinc ion, which has a structural role (By similarity). The magnesium ion is essential for the helicase activity (By similarity).</text>
</comment>
<comment type="cofactor">
    <molecule>RNA-directed RNA polymerase</molecule>
    <cofactor evidence="3">
        <name>Mg(2+)</name>
        <dbReference type="ChEBI" id="CHEBI:18420"/>
    </cofactor>
    <text evidence="3">Binds 2 magnesium ion that constitute a dinuclear catalytic metal center.</text>
</comment>
<comment type="activity regulation">
    <molecule>Viroporin p7</molecule>
    <text evidence="2 5">Inhibited by the antiviral drug hexamethylene amiloride (By similarity). Inhibition by amantadine appears to be genotype-dependent (By similarity). Also inhibited by long-alkyl-chain iminosugar derivatives (By similarity).</text>
</comment>
<comment type="activity regulation">
    <molecule>RNA-directed RNA polymerase</molecule>
    <text evidence="5">Activity is up-regulated by PRK2/PKN2-mediated phosphorylation.</text>
</comment>
<comment type="subunit">
    <molecule>Mature core protein</molecule>
    <text evidence="2 4 5 6 8 9 11">Homooligomer (By similarity). Interacts with E1 (via C-terminus) (By similarity). Interacts with the non-structural protein 5A (By similarity). Interacts (via N-terminus) with host STAT1 (via SH2 domain); this interaction results in decreased STAT1 phosphorylation and ubiquitin-mediated proteasome-dependent STAT1 degradation, leading to decreased IFN-stimulated gene transcription (By similarity). Interacts with host STAT3; this interaction constitutively activates STAT3 (By similarity). Interacts with host LTBR receptor (By similarity). Interacts with host TNFRSF1A receptor and possibly induces apoptosis (By similarity). Interacts with host HNRPK (By similarity). Interacts with host YWHAE (By similarity). Interacts with host UBE3A/E6AP (By similarity). Interacts with host DDX3X (By similarity). Interacts with host APOA2 (By similarity). Interacts with host RXRA protein (By similarity). Interacts with host SP110 isoform 3/Sp110b; this interaction sequesters the transcriptional corepressor SP110 away from the nucleus (By similarity). Interacts with host CREB3 nuclear transcription protein; this interaction triggers cell transformation (By similarity). Interacts with host ACY3 (By similarity). Interacts with host C1QR1 (By similarity). Interacts with host RBM24; this interaction, which enhances the interaction of the mature core protein with 5'-UTR, may inhibit viral translation and favor replication (By similarity). Interacts with host EIF2AK2/PKR; this interaction induces the autophosphorylation of EIF2AK2 (By similarity). Part of the viral assembly initiation complex composed of NS2, E1, E2, NS3, NS4A, NS5A and the mature core protein (By similarity).</text>
</comment>
<comment type="subunit">
    <molecule>Envelope glycoprotein E1</molecule>
    <text evidence="5 11">Forms a heterodimer with envelope glycoprotein E2 (By similarity). Interacts with mature core protein (By similarity). Interacts with protease NS2 (By similarity). The heterodimer E1/E2 interacts with host CLDN1; this interaction plays a role in viral entry into host cell (By similarity). Interacts with host SPSB2 (via C-terminus) (By similarity). Part of the viral assembly initiation complex composed of NS2, E1, E2, NS3, NS4A, NS5A and the mature core protein (By similarity). Interacts with host NEURL3; this interaction prevents E1 binding to glycoprotein E2 (By similarity).</text>
</comment>
<comment type="subunit">
    <molecule>Envelope glycoprotein E2</molecule>
    <text evidence="5 11 12">Forms a heterodimer with envelope glycoprotein E1 (By similarity). Interacts with host CD81 and SCARB1 receptors; these interactions play a role in viral entry into host cell (By similarity). Interacts with host EIF2AK2/PKR; this interaction inhibits EIF2AK2 and probably allows the virus to evade the innate immune response (By similarity). Interacts with host CD209/DC-SIGN and CLEC4M/DC-SIGNR (By similarity). Interact with host SPCS1; this interaction is essential for viral particle assembly (By similarity). Interacts with protease NS2 (By similarity). The heterodimer E1/E2 interacts with host CLDN1; this interaction plays a role in viral entry into host cell (By similarity). Part of the viral assembly initiation complex composed of NS2, E1, E2, NS3, NS4A, NS5A and the mature core protein (By similarity). Interacts with host SLC3A2/4F2hc; the interaction may facilitate viral entry into host cell (By similarity). Interacts with human PLSCR1 (By similarity).</text>
</comment>
<comment type="subunit">
    <molecule>Viroporin p7</molecule>
    <text evidence="1 5 11">Homohexamer (By similarity). Homoheptamer (By similarity). Interacts with protease NS2 (By similarity).</text>
</comment>
<comment type="subunit">
    <molecule>Protease NS2</molecule>
    <text evidence="5 11">Homodimer (By similarity). Interacts with host SPCS1; this interaction is essential for viral particle assembly (By similarity). Interacts with envelope glycoprotein E1 (By similarity). Interacts with envelope glycoprotein E2 (By similarity). Interacts with viroporin p7 (By similarity). Interacts with serine protease/helicase NS3 (By similarity). Part of the replication complex composed of NS2, NS3, NS4A, NS4B, NS5A and the RNA-directed RNA polymerase embedded in an ER-derived membranous web (By similarity). Part of the viral assembly initiation complex composed of NS2, E1, E2, NS3, NS4A, NS5A and the mature core protein (By similarity).</text>
</comment>
<comment type="subunit">
    <molecule>Serine protease/helicase NS3</molecule>
    <text evidence="3 5 11 12">Interacts with protease NS2 (By similarity). Interacts with non-structural protein 4A; this interaction stabilizes the folding of NS3 serine protease (By similarity). NS3-NS4A interaction is essential for NS3 activation and allows membrane anchorage of the latter (By similarity). NS3/NS4A complex also prevents phosphorylation of host IRF3, thus preventing the establishment of dsRNA induced antiviral state (By similarity). Interacts with host MAVS; this interaction leads to the cleavage and inhibition of host MAVS (By similarity). Interacts with host TICAM1; this interaction leads to the cleavage and inhibition of host TICAM1 (By similarity). Interacts with host TANK-binding kinase/TBK1; this interaction results in the inhibition of the association between TBK1 and IRF3, which leads to the inhibition of IRF3 activation (By similarity). Interacts with host RBM24 (By similarity). Part of the replication complex composed of NS2, NS3, NS4A, NS4B, NS5A and the RNA-directed RNA polymerase embedded in an ER-derived membranous web (By similarity). Part of the viral assembly initiation complex composed of NS2, E1, E2, NS3, NS4A, NS5A and the mature core protein (By similarity).</text>
</comment>
<comment type="subunit">
    <molecule>Non-structural protein 4A</molecule>
    <text evidence="2 3 5 11">Interacts with NS3 serine protease; this interaction stabilizes the folding of NS3 serine protease (By similarity). NS3-NS4A interaction is essential for NS3 activation and allows membrane anchorage of the latter (By similarity). Interacts with non-structural protein 5A (via N-terminus) (By similarity). Part of the replication complex composed of NS2, NS3, NS4A, NS4B, NS5A and the RNA-directed RNA polymerase embedded in an ER-derived membranous web (By similarity). Part of the viral assembly initiation complex composed of NS2, E1, E2, NS3, NS4A, NS5A and the mature core protein (By similarity).</text>
</comment>
<comment type="subunit">
    <molecule>Non-structural protein 4B</molecule>
    <text evidence="5 11">Homomultimer (By similarity). Interacts with non-structural protein NS5A (By similarity). Interacts with host PLA2G4C; this interaction likely initiates the recruitment of replication complexes to lipid droplets (By similarity). Interacts with host STING; this interaction disrupts the interaction between STING and TBK1 thereby suppressing the interferon signaling (By similarity). Part of the replication complex composed of NS2, NS3, NS4A, NS4B, NS5A and the RNA-directed RNA polymerase embedded in an ER-derived membranous web (By similarity).</text>
</comment>
<comment type="subunit">
    <molecule>Non-structural protein 5A</molecule>
    <text evidence="2 3 4 5 11">Monomer. Homodimer; dimerization is required for RNA-binding (By similarity). Interacts with the mature core protein (By similarity). Interacts (via N-terminus) with non-structural protein 4A (By similarity). Interacts with non-structural protein 4B. Interacts (via region D2) with RNA-directed RNA polymerase (By similarity). Part of the viral assembly initiation complex composed of NS2, E1, E2, NS3, NS4A, NS5A and the mature core protein (By similarity). Part of the replication complex composed of NS2, NS3, NS4A, NS4B, NS5A and the RNA-directed RNA polymerase embedded in an ER-derived membranous web (By similarity). Interacts with host GRB2 (By similarity). Interacts with host BIN1 (By similarity). Interacts with host PIK3R1 (By similarity). Interacts with host SRCAP (By similarity). Interacts with host FKBP8 (By similarity). Interacts (via C-terminus) with host VAPB (via MSP domain). Interacts with host EIF2AK2/PKR; this interaction leads to disruption of EIF2AK2 dimerization by NS5A and probably allows the virus to evade the innate immune response. Interacts (via N-terminus) with host PACSIN2 (via N-terminus); this interaction attenuates protein kinase C alpha-mediated phosphorylation of PACSIN2 by disrupting the interaction between PACSIN2 and PRKCA (By similarity). Interacts (via N-terminus) with host SRC kinase (via SH2 domain) (By similarity). Interacts with most Src-family kinases (By similarity). Interacts with host IFI27 and SKP2; promotes the ubiquitin-mediated proteasomal degradation of NS5A (By similarity). Interacts with host GPS2 (By similarity). Interacts with host TNFRSF21; this interaction allows the modulation by the virus of JNK, p38 MAPK, STAT3, and Akt signaling pathways in a DR6-dependent manner. Interacts (via N-terminus) with host CIDEB (via N-terminus); this interaction seems to regulate the association of HCV particles with APOE (By similarity). Interacts with host CHKA/Choline Kinase-alpha; CHKA bridges host PI4KA and NS5A and potentiates NS5A-stimulated PI4KA activity, which then facilitates the targeting of the ternary complex to the ER for viral replication (By similarity). Interacts with host SPSB2 (via C-terminus); this interaction targets NS5A for ubiquitination and degradation (By similarity). Interacts with host RAB18; this interaction may promote the association of NS5A and other replicase components with lipid droplets (By similarity). Interacts (via region D2) with host PPIA/CYPA; the interaction stimulates RNA-binding ability of NS5A and is dependent on the peptidyl-prolyl cis-trans isomerase activity of PPIA/CYPA. Interacts with host TRIM14; this interaction induces the degradation of NS5A (By similarity).</text>
</comment>
<comment type="subunit">
    <molecule>RNA-directed RNA polymerase</molecule>
    <text evidence="5">Homooligomer (By similarity). Interacts with non-structural protein 5A (By similarity). Interacts with host VAPB (By similarity). Interacts with host PRK2/PKN2 (By similarity). Interacts with host HNRNPA1 and SEPT6; these interactions facilitate viral replication (By similarity). Part of the replication complex composed of NS2, NS3, NS4A, NS4B, NS5A and the RNA-directed RNA polymerase (By similarity).</text>
</comment>
<comment type="subcellular location">
    <molecule>Core protein precursor</molecule>
    <subcellularLocation>
        <location evidence="4">Host endoplasmic reticulum membrane</location>
        <topology evidence="13">Single-pass membrane protein</topology>
    </subcellularLocation>
    <subcellularLocation>
        <location evidence="4">Host mitochondrion membrane</location>
        <topology evidence="13">Single-pass type I membrane protein</topology>
    </subcellularLocation>
    <text>The C-terminal transmembrane domain of the core protein precursor contains an ER signal leading the nascent polyprotein to the ER membrane.</text>
</comment>
<comment type="subcellular location">
    <molecule>Mature core protein</molecule>
    <subcellularLocation>
        <location evidence="11">Virion</location>
    </subcellularLocation>
    <subcellularLocation>
        <location evidence="11">Host cytoplasm</location>
    </subcellularLocation>
    <subcellularLocation>
        <location evidence="2">Host nucleus</location>
    </subcellularLocation>
    <subcellularLocation>
        <location evidence="11">Host lipid droplet</location>
    </subcellularLocation>
    <text evidence="5">Only a minor proportion of core protein is present in the nucleus (By similarity). Probably present on the surface of lipid droplets (By similarity).</text>
</comment>
<comment type="subcellular location">
    <molecule>Envelope glycoprotein E1</molecule>
    <subcellularLocation>
        <location evidence="19">Virion membrane</location>
        <topology evidence="19">Single-pass type I membrane protein</topology>
    </subcellularLocation>
    <subcellularLocation>
        <location>Host endoplasmic reticulum membrane</location>
        <topology evidence="5">Single-pass type I membrane protein</topology>
    </subcellularLocation>
    <text evidence="5">The C-terminal transmembrane domain acts as a signal sequence and forms a hairpin structure before cleavage by host signal peptidase (By similarity). After cleavage, the membrane sequence is retained at the C-terminus of the protein, serving as ER membrane anchor (By similarity). A reorientation of the second hydrophobic stretch occurs after cleavage producing a single reoriented transmembrane domain (By similarity). These events explain the final topology of the protein (By similarity).</text>
</comment>
<comment type="subcellular location">
    <molecule>Envelope glycoprotein E2</molecule>
    <subcellularLocation>
        <location evidence="19">Virion membrane</location>
        <topology evidence="19">Single-pass type I membrane protein</topology>
    </subcellularLocation>
    <subcellularLocation>
        <location>Host endoplasmic reticulum membrane</location>
        <topology evidence="5">Single-pass type I membrane protein</topology>
    </subcellularLocation>
    <subcellularLocation>
        <location evidence="12">Host lipid droplet</location>
    </subcellularLocation>
    <text evidence="5">The C-terminal transmembrane domain acts as a signal sequence and forms a hairpin structure before cleavage by host signal peptidase (By similarity). After cleavage, the membrane sequence is retained at the C-terminus of the protein, serving as ER membrane anchor (By similarity). A reorientation of the second hydrophobic stretch occurs after cleavage producing a single reoriented transmembrane domain (By similarity). These events explain the final topology of the protein (By similarity).</text>
</comment>
<comment type="subcellular location">
    <molecule>Viroporin p7</molecule>
    <subcellularLocation>
        <location evidence="5">Host endoplasmic reticulum membrane</location>
        <topology evidence="5">Multi-pass membrane protein</topology>
    </subcellularLocation>
    <subcellularLocation>
        <location evidence="5">Host mitochondrion</location>
    </subcellularLocation>
    <subcellularLocation>
        <location evidence="5">Host cell membrane</location>
    </subcellularLocation>
    <text evidence="5">The C-terminus of p7 membrane domain acts as a signal sequence (By similarity). After cleavage by host signal peptidase, the membrane sequence is retained at the C-terminus of the protein, serving as ER membrane anchor (By similarity). ER retention of p7 is leaky and a small fraction reaches the plasma membrane (By similarity).</text>
</comment>
<comment type="subcellular location">
    <molecule>Protease NS2</molecule>
    <subcellularLocation>
        <location evidence="5">Host endoplasmic reticulum membrane</location>
        <topology evidence="5">Multi-pass membrane protein</topology>
    </subcellularLocation>
    <subcellularLocation>
        <location evidence="12">Host lipid droplet</location>
    </subcellularLocation>
    <text evidence="11">Probably present on the surface of lipid droplets.</text>
</comment>
<comment type="subcellular location">
    <molecule>Serine protease/helicase NS3</molecule>
    <subcellularLocation>
        <location evidence="19">Host endoplasmic reticulum membrane</location>
        <topology evidence="19">Peripheral membrane protein</topology>
    </subcellularLocation>
    <text evidence="19">NS3 is associated to the ER membrane through its binding to NS4A.</text>
</comment>
<comment type="subcellular location">
    <molecule>Non-structural protein 4A</molecule>
    <subcellularLocation>
        <location evidence="19">Host endoplasmic reticulum membrane</location>
        <topology evidence="19">Single-pass type I membrane protein</topology>
    </subcellularLocation>
    <text>Host membrane insertion occurs after processing by the NS3 protease.</text>
</comment>
<comment type="subcellular location">
    <molecule>Non-structural protein 4B</molecule>
    <subcellularLocation>
        <location evidence="5">Host endoplasmic reticulum membrane</location>
        <topology evidence="5">Multi-pass membrane protein</topology>
    </subcellularLocation>
    <text evidence="5">A reorientation of the N-terminus into the ER lumen occurs post-translationally.</text>
</comment>
<comment type="subcellular location">
    <molecule>Non-structural protein 5A</molecule>
    <subcellularLocation>
        <location evidence="5">Host endoplasmic reticulum membrane</location>
        <topology evidence="5">Peripheral membrane protein</topology>
    </subcellularLocation>
    <subcellularLocation>
        <location evidence="5">Host cytoplasm</location>
        <location evidence="5">Host perinuclear region</location>
    </subcellularLocation>
    <subcellularLocation>
        <location evidence="2">Host mitochondrion</location>
    </subcellularLocation>
    <subcellularLocation>
        <location evidence="5">Host cytoplasm</location>
    </subcellularLocation>
    <subcellularLocation>
        <location evidence="2">Host nucleus</location>
    </subcellularLocation>
    <subcellularLocation>
        <location evidence="12">Host lipid droplet</location>
    </subcellularLocation>
    <text evidence="2 5">Host membrane insertion occurs after processing by the NS3 protease (By similarity). Localizes at the surface of lipid droplets (By similarity).</text>
</comment>
<comment type="subcellular location">
    <molecule>RNA-directed RNA polymerase</molecule>
    <subcellularLocation>
        <location evidence="5">Host cytoplasm</location>
    </subcellularLocation>
    <subcellularLocation>
        <location>Host endoplasmic reticulum membrane</location>
        <topology evidence="5">Single-pass type IV membrane protein</topology>
    </subcellularLocation>
    <text evidence="5">Host membrane insertion occurs after processing by the NS3 protease.</text>
</comment>
<comment type="domain">
    <molecule>Envelope glycoprotein E1</molecule>
    <text evidence="5">The transmembrane regions of envelope E1 and E2 glycoproteins are involved in heterodimer formation, ER localization, and assembly of these proteins.</text>
</comment>
<comment type="domain">
    <molecule>Envelope glycoprotein E2</molecule>
    <text evidence="3 5">The transmembrane regions of envelope E1 and E2 glycoproteins are involved in heterodimer formation, ER localization, and assembly of these proteins (By similarity). Envelope E2 glycoprotein contain two highly variable regions called hypervariable region 1 and 2 (HVR1 and HVR2) (By similarity). E2 also contain two segments involved in CD81-binding (By similarity). HVR1 is implicated in the SCARB1-mediated cell entry and probably acts as a regulator of the association of particles with lipids (By similarity).</text>
</comment>
<comment type="domain">
    <molecule>Protease NS2</molecule>
    <text evidence="3">The N-terminus of NS3 is required for the catalytic activity of protease NS2 (By similarity). The minimal catalytic region includes the C-terminus of NS2 and the N-terminus NS3 protease domain (active region NS2-3) (By similarity).</text>
</comment>
<comment type="domain">
    <molecule>Serine protease/helicase NS3</molecule>
    <text evidence="2 5">The N-terminal one-third contains the protease activity (By similarity). This region contains a zinc atom that does not belong to the active site, but may play a structural rather than a catalytic role (By similarity). This region is essential for the activity of protease NS2, maybe by contributing to the folding of the latter (By similarity). The NTPase/helicase activity is located in the twothirds C-terminus of NS3, this domain contains the NTPase and RNA-binding regions (By similarity).</text>
</comment>
<comment type="domain">
    <molecule>Non-structural protein 4B</molecule>
    <text evidence="11">Contains a glycine zipper region that critically contributes to the biogenesis of functional ER-derived replication organelles.</text>
</comment>
<comment type="domain">
    <molecule>Non-structural protein 5A</molecule>
    <text evidence="2 5">The N-terminus of NS5A acts as membrane anchor (By similarity). The central part of NS5A contains a variable region called interferon sensitivity determining region (ISDR) and seems to be intrinsically disordered and interacts with NS5B and host EIF2AK2 (By similarity). The C-terminus of NS5A contains a variable region called variable region 3 (V3) (By similarity). ISDR and V3 may be involved in sensitivity and/or resistance to IFN-alpha therapy (By similarity). The C-terminus contains a nuclear localization signal (By similarity). The SH3-binding domain is involved in the interaction with host BIN1, GRB2 and Src-family kinases (By similarity).</text>
</comment>
<comment type="PTM">
    <molecule>Genome polyprotein</molecule>
    <text evidence="4 5">Specific enzymatic cleavages in vivo yield mature proteins (By similarity). The structural proteins, core, E1, E2 and p7 are produced by proteolytic processing by host signal peptidases (By similarity). The core protein precursor is synthesized as a 23 kDa, which is retained in the ER membrane through the hydrophobic signal peptide (By similarity). Cleavage by the signal peptidase releases the 21 kDa mature core protein (By similarity). The cleavage of the core protein precursor occurs between aminoacids 176 and 188 but the exact cleavage site is not known (By similarity). Some degraded forms of the core protein appear as well during the course of infection (By similarity). The other proteins (p7, NS2, NS3, NS4A, NS4B, NS5A and NS5B) are cleaved by the viral proteases (By similarity). Autoprocessing between NS2 and NS3 is mediated by the NS2 cysteine protease catalytic domain and regulated by the NS3 N-terminal domain (By similarity).</text>
</comment>
<comment type="PTM">
    <molecule>Mature core protein</molecule>
    <text evidence="7">Phosphorylated by host PKC and PKA.</text>
</comment>
<comment type="PTM">
    <molecule>Mature core protein</molecule>
    <text evidence="8">Ubiquitinated; mediated by UBE3A and leading to core protein subsequent proteasomal degradation.</text>
</comment>
<comment type="PTM">
    <molecule>Envelope glycoprotein E1</molecule>
    <text evidence="5">Highly N-glycosylated.</text>
</comment>
<comment type="PTM">
    <molecule>Envelope glycoprotein E2</molecule>
    <text evidence="5">Highly N-glycosylated.</text>
</comment>
<comment type="PTM">
    <molecule>Protease NS2</molecule>
    <text evidence="5">Palmitoylation is required for NS2/3 autoprocessing and E2 recruitment to membranes.</text>
</comment>
<comment type="PTM">
    <molecule>Non-structural protein 4B</molecule>
    <text evidence="5">Palmitoylated. This modification may play a role in its polymerization or in protein-protein interactions.</text>
</comment>
<comment type="PTM">
    <molecule>Non-structural protein 5A</molecule>
    <text evidence="2 4">Phosphorylated on serines in a basal form termed p56 (By similarity). p58 is a hyperphosphorylated form of p56 (By similarity). p56 and p58 coexist in the cell in roughly equivalent amounts (By similarity). Hyperphosphorylation is dependent on the presence of NS4A (By similarity). Host CSNK1A1/CKI-alpha or RPS6KB1 kinases may be responsible for NS5A phosphorylation (By similarity).</text>
</comment>
<comment type="PTM">
    <molecule>Non-structural protein 5A</molecule>
    <text evidence="11">Tyrosine phosphorylation is essential for the interaction with host SRC.</text>
</comment>
<comment type="PTM">
    <molecule>RNA-directed RNA polymerase</molecule>
    <text evidence="2">The N-terminus is phosphorylated by host PRK2/PKN2.</text>
</comment>
<comment type="miscellaneous">
    <text evidence="19">Viral particle assembly takes place at the surface of ER-derived membranes in close proximity to lipid droplets. NS2 associates with E1/E2 glycoproteins, NS3 and NS5A, which interacts with the viral RNA and core protein to promote genome encapsidation. The nucleocapsid buds at the ER membrane where E1/E2 glycoproteins are anchored and afterward associate with nascent lipid droplet to acquire APOE and APOC. Secretion of viral particles is probably regulated by viroporin p7.</text>
</comment>
<comment type="miscellaneous">
    <molecule>Non-structural protein 5A</molecule>
    <text evidence="19">Cell culture adaptation of the virus leads to mutations in NS5A, reducing its inhibitory effect on replication.</text>
</comment>
<comment type="miscellaneous">
    <molecule>Mature core protein</molecule>
    <text evidence="2">Exerts viral interference on hepatitis B virus when HCV and HBV coinfect the same cell, by suppressing HBV gene expression, RNA encapsidation and budding.</text>
</comment>
<comment type="similarity">
    <text evidence="19">Belongs to the hepacivirus polyprotein family.</text>
</comment>
<comment type="caution">
    <text evidence="19">The core gene probably also codes for alternative reading frame proteins (ARFPs). Many functions depicted for the core protein might belong to the ARFPs.</text>
</comment>
<dbReference type="EC" id="3.4.22.-" evidence="3"/>
<dbReference type="EC" id="3.4.21.98" evidence="5"/>
<dbReference type="EC" id="3.6.1.15" evidence="5"/>
<dbReference type="EC" id="3.6.4.13" evidence="5"/>
<dbReference type="EC" id="2.7.7.48" evidence="5"/>
<dbReference type="EMBL" id="Y12083">
    <property type="protein sequence ID" value="CAA72801.1"/>
    <property type="molecule type" value="Genomic_RNA"/>
</dbReference>
<dbReference type="SMR" id="O39927"/>
<dbReference type="BindingDB" id="O39927"/>
<dbReference type="MEROPS" id="C18.001"/>
<dbReference type="TCDB" id="1.A.53.1.7">
    <property type="family name" value="the hepatitis c virus p7 viroporin cation-selective channel (hcv-p7) family"/>
</dbReference>
<dbReference type="euHCVdb" id="Y12083"/>
<dbReference type="Proteomes" id="UP000007416">
    <property type="component" value="Genome"/>
</dbReference>
<dbReference type="GO" id="GO:0044167">
    <property type="term" value="C:host cell endoplasmic reticulum membrane"/>
    <property type="evidence" value="ECO:0007669"/>
    <property type="project" value="UniProtKB-SubCell"/>
</dbReference>
<dbReference type="GO" id="GO:0044186">
    <property type="term" value="C:host cell lipid droplet"/>
    <property type="evidence" value="ECO:0007669"/>
    <property type="project" value="UniProtKB-SubCell"/>
</dbReference>
<dbReference type="GO" id="GO:0044191">
    <property type="term" value="C:host cell mitochondrial membrane"/>
    <property type="evidence" value="ECO:0007669"/>
    <property type="project" value="UniProtKB-SubCell"/>
</dbReference>
<dbReference type="GO" id="GO:0042025">
    <property type="term" value="C:host cell nucleus"/>
    <property type="evidence" value="ECO:0007669"/>
    <property type="project" value="UniProtKB-SubCell"/>
</dbReference>
<dbReference type="GO" id="GO:0044220">
    <property type="term" value="C:host cell perinuclear region of cytoplasm"/>
    <property type="evidence" value="ECO:0007669"/>
    <property type="project" value="UniProtKB-SubCell"/>
</dbReference>
<dbReference type="GO" id="GO:0020002">
    <property type="term" value="C:host cell plasma membrane"/>
    <property type="evidence" value="ECO:0007669"/>
    <property type="project" value="UniProtKB-SubCell"/>
</dbReference>
<dbReference type="GO" id="GO:0016020">
    <property type="term" value="C:membrane"/>
    <property type="evidence" value="ECO:0007669"/>
    <property type="project" value="UniProtKB-KW"/>
</dbReference>
<dbReference type="GO" id="GO:1990904">
    <property type="term" value="C:ribonucleoprotein complex"/>
    <property type="evidence" value="ECO:0007669"/>
    <property type="project" value="UniProtKB-KW"/>
</dbReference>
<dbReference type="GO" id="GO:0019031">
    <property type="term" value="C:viral envelope"/>
    <property type="evidence" value="ECO:0007669"/>
    <property type="project" value="UniProtKB-KW"/>
</dbReference>
<dbReference type="GO" id="GO:0019013">
    <property type="term" value="C:viral nucleocapsid"/>
    <property type="evidence" value="ECO:0007669"/>
    <property type="project" value="UniProtKB-KW"/>
</dbReference>
<dbReference type="GO" id="GO:0055036">
    <property type="term" value="C:virion membrane"/>
    <property type="evidence" value="ECO:0007669"/>
    <property type="project" value="UniProtKB-SubCell"/>
</dbReference>
<dbReference type="GO" id="GO:0005524">
    <property type="term" value="F:ATP binding"/>
    <property type="evidence" value="ECO:0007669"/>
    <property type="project" value="UniProtKB-KW"/>
</dbReference>
<dbReference type="GO" id="GO:0016887">
    <property type="term" value="F:ATP hydrolysis activity"/>
    <property type="evidence" value="ECO:0007669"/>
    <property type="project" value="RHEA"/>
</dbReference>
<dbReference type="GO" id="GO:0015267">
    <property type="term" value="F:channel activity"/>
    <property type="evidence" value="ECO:0007669"/>
    <property type="project" value="UniProtKB-KW"/>
</dbReference>
<dbReference type="GO" id="GO:0004197">
    <property type="term" value="F:cysteine-type endopeptidase activity"/>
    <property type="evidence" value="ECO:0007669"/>
    <property type="project" value="InterPro"/>
</dbReference>
<dbReference type="GO" id="GO:0003723">
    <property type="term" value="F:RNA binding"/>
    <property type="evidence" value="ECO:0007669"/>
    <property type="project" value="UniProtKB-KW"/>
</dbReference>
<dbReference type="GO" id="GO:0003724">
    <property type="term" value="F:RNA helicase activity"/>
    <property type="evidence" value="ECO:0007669"/>
    <property type="project" value="UniProtKB-EC"/>
</dbReference>
<dbReference type="GO" id="GO:0003968">
    <property type="term" value="F:RNA-directed RNA polymerase activity"/>
    <property type="evidence" value="ECO:0007669"/>
    <property type="project" value="UniProtKB-KW"/>
</dbReference>
<dbReference type="GO" id="GO:0004252">
    <property type="term" value="F:serine-type endopeptidase activity"/>
    <property type="evidence" value="ECO:0007669"/>
    <property type="project" value="InterPro"/>
</dbReference>
<dbReference type="GO" id="GO:0017124">
    <property type="term" value="F:SH3 domain binding"/>
    <property type="evidence" value="ECO:0007669"/>
    <property type="project" value="UniProtKB-KW"/>
</dbReference>
<dbReference type="GO" id="GO:0005198">
    <property type="term" value="F:structural molecule activity"/>
    <property type="evidence" value="ECO:0007669"/>
    <property type="project" value="InterPro"/>
</dbReference>
<dbReference type="GO" id="GO:0008270">
    <property type="term" value="F:zinc ion binding"/>
    <property type="evidence" value="ECO:0007669"/>
    <property type="project" value="InterPro"/>
</dbReference>
<dbReference type="GO" id="GO:0075512">
    <property type="term" value="P:clathrin-dependent endocytosis of virus by host cell"/>
    <property type="evidence" value="ECO:0007669"/>
    <property type="project" value="UniProtKB-KW"/>
</dbReference>
<dbReference type="GO" id="GO:0039654">
    <property type="term" value="P:fusion of virus membrane with host endosome membrane"/>
    <property type="evidence" value="ECO:0007669"/>
    <property type="project" value="UniProtKB-KW"/>
</dbReference>
<dbReference type="GO" id="GO:0034220">
    <property type="term" value="P:monoatomic ion transmembrane transport"/>
    <property type="evidence" value="ECO:0007669"/>
    <property type="project" value="UniProtKB-KW"/>
</dbReference>
<dbReference type="GO" id="GO:0006508">
    <property type="term" value="P:proteolysis"/>
    <property type="evidence" value="ECO:0007669"/>
    <property type="project" value="UniProtKB-KW"/>
</dbReference>
<dbReference type="GO" id="GO:0039520">
    <property type="term" value="P:symbiont-mediated activation of host autophagy"/>
    <property type="evidence" value="ECO:0007669"/>
    <property type="project" value="UniProtKB-KW"/>
</dbReference>
<dbReference type="GO" id="GO:0039645">
    <property type="term" value="P:symbiont-mediated perturbation of host cell cycle G1/S transition checkpoint"/>
    <property type="evidence" value="ECO:0007669"/>
    <property type="project" value="UniProtKB-KW"/>
</dbReference>
<dbReference type="GO" id="GO:0039545">
    <property type="term" value="P:symbiont-mediated suppression of host cytoplasmic pattern recognition receptor signaling pathway via inhibition of MAVS activity"/>
    <property type="evidence" value="ECO:0007669"/>
    <property type="project" value="UniProtKB-KW"/>
</dbReference>
<dbReference type="GO" id="GO:0039563">
    <property type="term" value="P:symbiont-mediated suppression of host JAK-STAT cascade via inhibition of STAT1 activity"/>
    <property type="evidence" value="ECO:0007669"/>
    <property type="project" value="UniProtKB-KW"/>
</dbReference>
<dbReference type="GO" id="GO:0039527">
    <property type="term" value="P:symbiont-mediated suppression of host TRAF-mediated signal transduction"/>
    <property type="evidence" value="ECO:0007669"/>
    <property type="project" value="UniProtKB-KW"/>
</dbReference>
<dbReference type="GO" id="GO:0039502">
    <property type="term" value="P:symbiont-mediated suppression of host type I interferon-mediated signaling pathway"/>
    <property type="evidence" value="ECO:0007669"/>
    <property type="project" value="UniProtKB-KW"/>
</dbReference>
<dbReference type="GO" id="GO:0019087">
    <property type="term" value="P:symbiont-mediated transformation of host cell"/>
    <property type="evidence" value="ECO:0007669"/>
    <property type="project" value="InterPro"/>
</dbReference>
<dbReference type="GO" id="GO:0039694">
    <property type="term" value="P:viral RNA genome replication"/>
    <property type="evidence" value="ECO:0007669"/>
    <property type="project" value="InterPro"/>
</dbReference>
<dbReference type="GO" id="GO:0019062">
    <property type="term" value="P:virion attachment to host cell"/>
    <property type="evidence" value="ECO:0007669"/>
    <property type="project" value="UniProtKB-KW"/>
</dbReference>
<dbReference type="CDD" id="cd20903">
    <property type="entry name" value="HCV_p7"/>
    <property type="match status" value="1"/>
</dbReference>
<dbReference type="CDD" id="cd23202">
    <property type="entry name" value="Hepacivirus_RdRp"/>
    <property type="match status" value="1"/>
</dbReference>
<dbReference type="FunFam" id="2.40.10.10:FF:000029">
    <property type="entry name" value="Genome polyprotein"/>
    <property type="match status" value="1"/>
</dbReference>
<dbReference type="FunFam" id="3.30.160.890:FF:000001">
    <property type="entry name" value="Genome polyprotein"/>
    <property type="match status" value="1"/>
</dbReference>
<dbReference type="FunFam" id="3.30.70.270:FF:000015">
    <property type="entry name" value="Genome polyprotein"/>
    <property type="match status" value="1"/>
</dbReference>
<dbReference type="FunFam" id="3.40.50.300:FF:000557">
    <property type="entry name" value="Genome polyprotein"/>
    <property type="match status" value="1"/>
</dbReference>
<dbReference type="FunFam" id="3.40.50.300:FF:000717">
    <property type="entry name" value="Genome polyprotein"/>
    <property type="match status" value="1"/>
</dbReference>
<dbReference type="Gene3D" id="2.40.10.120">
    <property type="match status" value="1"/>
</dbReference>
<dbReference type="Gene3D" id="3.30.70.270">
    <property type="match status" value="2"/>
</dbReference>
<dbReference type="Gene3D" id="6.10.250.1610">
    <property type="match status" value="1"/>
</dbReference>
<dbReference type="Gene3D" id="6.10.250.1750">
    <property type="match status" value="1"/>
</dbReference>
<dbReference type="Gene3D" id="6.10.250.2920">
    <property type="match status" value="1"/>
</dbReference>
<dbReference type="Gene3D" id="2.20.25.210">
    <property type="entry name" value="Hepatitis C NS5A, domain 1B"/>
    <property type="match status" value="1"/>
</dbReference>
<dbReference type="Gene3D" id="4.10.710.10">
    <property type="entry name" value="Hepatitis C Virus Capsid Protein, Chain A"/>
    <property type="match status" value="1"/>
</dbReference>
<dbReference type="Gene3D" id="3.30.160.890">
    <property type="entry name" value="Hepatitis C virus envelope glycoprotein E1, chain C"/>
    <property type="match status" value="1"/>
</dbReference>
<dbReference type="Gene3D" id="2.30.30.710">
    <property type="entry name" value="Hepatitis C virus non-structural protein NS2, C-terminal domain"/>
    <property type="match status" value="1"/>
</dbReference>
<dbReference type="Gene3D" id="1.20.1280.150">
    <property type="entry name" value="Hepatitis C virus non-structural protein NS2, N-terminal domain"/>
    <property type="match status" value="1"/>
</dbReference>
<dbReference type="Gene3D" id="2.20.25.220">
    <property type="entry name" value="Hepatitis C virus NS5A, 1B domain"/>
    <property type="match status" value="1"/>
</dbReference>
<dbReference type="Gene3D" id="3.40.50.300">
    <property type="entry name" value="P-loop containing nucleotide triphosphate hydrolases"/>
    <property type="match status" value="2"/>
</dbReference>
<dbReference type="Gene3D" id="1.10.820.10">
    <property type="entry name" value="RNA Helicase Chain A , domain 3"/>
    <property type="match status" value="1"/>
</dbReference>
<dbReference type="Gene3D" id="2.40.10.10">
    <property type="entry name" value="Trypsin-like serine proteases"/>
    <property type="match status" value="1"/>
</dbReference>
<dbReference type="InterPro" id="IPR043502">
    <property type="entry name" value="DNA/RNA_pol_sf"/>
</dbReference>
<dbReference type="InterPro" id="IPR011492">
    <property type="entry name" value="Flavi_DEAD"/>
</dbReference>
<dbReference type="InterPro" id="IPR002521">
    <property type="entry name" value="HCV_Core_C"/>
</dbReference>
<dbReference type="InterPro" id="IPR044896">
    <property type="entry name" value="HCV_core_chain_A"/>
</dbReference>
<dbReference type="InterPro" id="IPR002522">
    <property type="entry name" value="HCV_core_N"/>
</dbReference>
<dbReference type="InterPro" id="IPR002519">
    <property type="entry name" value="HCV_Env"/>
</dbReference>
<dbReference type="InterPro" id="IPR002531">
    <property type="entry name" value="HCV_NS1"/>
</dbReference>
<dbReference type="InterPro" id="IPR002518">
    <property type="entry name" value="HCV_NS2"/>
</dbReference>
<dbReference type="InterPro" id="IPR042205">
    <property type="entry name" value="HCV_NS2_C"/>
</dbReference>
<dbReference type="InterPro" id="IPR042209">
    <property type="entry name" value="HCV_NS2_N"/>
</dbReference>
<dbReference type="InterPro" id="IPR000745">
    <property type="entry name" value="HCV_NS4a"/>
</dbReference>
<dbReference type="InterPro" id="IPR001490">
    <property type="entry name" value="HCV_NS4b"/>
</dbReference>
<dbReference type="InterPro" id="IPR002868">
    <property type="entry name" value="HCV_NS5a"/>
</dbReference>
<dbReference type="InterPro" id="IPR013192">
    <property type="entry name" value="HCV_NS5A_1a"/>
</dbReference>
<dbReference type="InterPro" id="IPR013193">
    <property type="entry name" value="HCV_NS5a_1B_dom"/>
</dbReference>
<dbReference type="InterPro" id="IPR038568">
    <property type="entry name" value="HCV_NS5A_1B_sf"/>
</dbReference>
<dbReference type="InterPro" id="IPR024350">
    <property type="entry name" value="HCV_NS5a_C"/>
</dbReference>
<dbReference type="InterPro" id="IPR049913">
    <property type="entry name" value="HCV_p7"/>
</dbReference>
<dbReference type="InterPro" id="IPR014001">
    <property type="entry name" value="Helicase_ATP-bd"/>
</dbReference>
<dbReference type="InterPro" id="IPR001650">
    <property type="entry name" value="Helicase_C-like"/>
</dbReference>
<dbReference type="InterPro" id="IPR004109">
    <property type="entry name" value="HepC_NS3_protease"/>
</dbReference>
<dbReference type="InterPro" id="IPR054175">
    <property type="entry name" value="NS3_helicase_C"/>
</dbReference>
<dbReference type="InterPro" id="IPR038170">
    <property type="entry name" value="NS5A_1a_sf"/>
</dbReference>
<dbReference type="InterPro" id="IPR027417">
    <property type="entry name" value="P-loop_NTPase"/>
</dbReference>
<dbReference type="InterPro" id="IPR009003">
    <property type="entry name" value="Peptidase_S1_PA"/>
</dbReference>
<dbReference type="InterPro" id="IPR043504">
    <property type="entry name" value="Peptidase_S1_PA_chymotrypsin"/>
</dbReference>
<dbReference type="InterPro" id="IPR043128">
    <property type="entry name" value="Rev_trsase/Diguanyl_cyclase"/>
</dbReference>
<dbReference type="InterPro" id="IPR007094">
    <property type="entry name" value="RNA-dir_pol_PSvirus"/>
</dbReference>
<dbReference type="InterPro" id="IPR002166">
    <property type="entry name" value="RNA_pol_HCV"/>
</dbReference>
<dbReference type="Pfam" id="PF07652">
    <property type="entry name" value="Flavi_DEAD"/>
    <property type="match status" value="1"/>
</dbReference>
<dbReference type="Pfam" id="PF01543">
    <property type="entry name" value="HCV_capsid"/>
    <property type="match status" value="1"/>
</dbReference>
<dbReference type="Pfam" id="PF01542">
    <property type="entry name" value="HCV_core"/>
    <property type="match status" value="1"/>
</dbReference>
<dbReference type="Pfam" id="PF01539">
    <property type="entry name" value="HCV_env"/>
    <property type="match status" value="1"/>
</dbReference>
<dbReference type="Pfam" id="PF01560">
    <property type="entry name" value="HCV_NS1"/>
    <property type="match status" value="1"/>
</dbReference>
<dbReference type="Pfam" id="PF01538">
    <property type="entry name" value="HCV_NS2"/>
    <property type="match status" value="1"/>
</dbReference>
<dbReference type="Pfam" id="PF01006">
    <property type="entry name" value="HCV_NS4a"/>
    <property type="match status" value="1"/>
</dbReference>
<dbReference type="Pfam" id="PF01001">
    <property type="entry name" value="HCV_NS4b"/>
    <property type="match status" value="1"/>
</dbReference>
<dbReference type="Pfam" id="PF01506">
    <property type="entry name" value="HCV_NS5a"/>
    <property type="match status" value="1"/>
</dbReference>
<dbReference type="Pfam" id="PF08300">
    <property type="entry name" value="HCV_NS5a_1a"/>
    <property type="match status" value="1"/>
</dbReference>
<dbReference type="Pfam" id="PF08301">
    <property type="entry name" value="HCV_NS5a_1b"/>
    <property type="match status" value="1"/>
</dbReference>
<dbReference type="Pfam" id="PF12941">
    <property type="entry name" value="HCV_NS5a_C"/>
    <property type="match status" value="1"/>
</dbReference>
<dbReference type="Pfam" id="PF22027">
    <property type="entry name" value="NS3_helicase_C"/>
    <property type="match status" value="1"/>
</dbReference>
<dbReference type="Pfam" id="PF02907">
    <property type="entry name" value="Peptidase_S29"/>
    <property type="match status" value="1"/>
</dbReference>
<dbReference type="Pfam" id="PF00998">
    <property type="entry name" value="RdRP_3"/>
    <property type="match status" value="1"/>
</dbReference>
<dbReference type="SMART" id="SM00487">
    <property type="entry name" value="DEXDc"/>
    <property type="match status" value="1"/>
</dbReference>
<dbReference type="SUPFAM" id="SSF56672">
    <property type="entry name" value="DNA/RNA polymerases"/>
    <property type="match status" value="1"/>
</dbReference>
<dbReference type="SUPFAM" id="SSF52540">
    <property type="entry name" value="P-loop containing nucleoside triphosphate hydrolases"/>
    <property type="match status" value="2"/>
</dbReference>
<dbReference type="SUPFAM" id="SSF50494">
    <property type="entry name" value="Trypsin-like serine proteases"/>
    <property type="match status" value="1"/>
</dbReference>
<dbReference type="PROSITE" id="PS51693">
    <property type="entry name" value="HCV_NS2_PRO"/>
    <property type="match status" value="1"/>
</dbReference>
<dbReference type="PROSITE" id="PS51192">
    <property type="entry name" value="HELICASE_ATP_BIND_1"/>
    <property type="match status" value="1"/>
</dbReference>
<dbReference type="PROSITE" id="PS51194">
    <property type="entry name" value="HELICASE_CTER"/>
    <property type="match status" value="1"/>
</dbReference>
<dbReference type="PROSITE" id="PS51822">
    <property type="entry name" value="HV_PV_NS3_PRO"/>
    <property type="match status" value="1"/>
</dbReference>
<dbReference type="PROSITE" id="PS50507">
    <property type="entry name" value="RDRP_SSRNA_POS"/>
    <property type="match status" value="1"/>
</dbReference>
<sequence>MSTLPKPQRKTKRNTNRRPMDVKFPGGGQIVGGVYLLPRKGPRLGVRATRKTSERSQPRGRRQPIPKARQPQGRHWAQPGYPWPLYGSEGCGWAGWLLSPRGSRPHWGPNDPRRRSRNLGKVIDTLTCGFADLMWYIPVVGAPLGGVAAALAHGVRAIEDGINYATGNLPGCSFSIFLLALLSCLTTPASALTYGNSSGLYHLTNDCSNSSIVLEADAMILHLPGCLPCVRVGNQSTCWHAVSPTLATPNASTPATGFRRHVDLLAGAAVVCSSLYIGDLCGSLFLAGQLFAFQPRRHWTVQDCNCSIYTGHVTGHKMAWDMMMNWSPTTTLVLSSILRVPEICASVIFGGHWGILLAVAYFGMAGNWLKVLAVLFLFAGVEAQTMIAHGVSQTTSGFASLLTPGAKQNIQLINTNGSWHINRTALNCNDSLQTGFLASLFYTHKFNSSGCPERMAACKPLAEFRQGWGQITHKNVSGPSDDRPYCWHYAPRPCEVVPARSVCGPVYCFTPSPVVVGTTDKRGNPTYTWGENETDVFMLESLRPPTGGWFGCTWMNSTGFTKTCGAPPCQIVPGNYNSSANELLCPTDCFRKHPEATYQRCGSGPWVTPRCLVDYAYRLWHYPCTVNFTLHKVRMFVGGTEHRFDVACNWTRGERCELHDRNRIEMSPLLFSTTQLSILPCSFSTMPALSTGLIHLHQNIVDVQYLYGVSTNVTSWVVKWEYIVLMFLVLADARICTCLWLMLLISTVEAAVERLVVLNAASAAGTAGWWWAVLFLCCVWYVKGRLVPACTYMALGMWPLLLTILALPPRAYAMDNEQAASLGAVGLLVITIFSITPMYKKLLNCFIWWNQYFLARAEAMVHEWVPDLRVRGGRDSIILLTCLLHPQLGFEVTKILLAVLAPLYILQYSLLKVPYFVRAHILLRACLLVRRLAGGKYVQACLLRLGAWTGTFVYDHLAPLSDWASDGLRDLAVAVEPVIFSPMEKKIITWGADTAACGDILSGLPVSARLGNLVLLGPADDMQRGGWKLLAPITAYAQQTRGLVGTIVTSLTGRDKNEVEGEVQVVSTDTQSFVATSINGVMWTVYHGPGFKTLAGPKGPVCQMYTNVDLDLVGWPSPPGARSLTPCNCGSSDLYLVTREADVIPARRRGDSRAALLSPRPISTLKGSSGGPIMCPSGHVVGLFRAAVCTRGVAKSLDFIPVENMETTMRSPSFTDNSTPPAVPQTYQVGYLHAPTGSGKSTRVPAAYASQGYKVLVLNPSVAATLSFGSYMRQAYGVEPNIRTGVRTVTTGGAITYSTYGEFLADGGCSGGAYDIIICDECHSTDPTTVLGVGTVLDQAETAGVRLTVLPTATPPGSVTVPHPNITETALPTTGEIPFYGKAIPLEYIKGGRHLIFCHSKKKCDELAGKLKSLGLNAVAFYRGVDVSVIPTSGDVVVCATDALMTGYTGDFDSVIDCNVAVTQVVDFSLDPTFSIETTTVPQDAVSRSQRRGRTGRGKPGVYRFVSQGERPSGMFDTVVLCEAYDTGCAWYELTPSETTVRLRAYMNTPGLPVCQDHLEFWEGVFTGLTHIDAHFLSHTKQAGENFAYLVAYQATVCARAKAPPPSWDMMWKCLIRLKPTLTGPTPLLYRLGAVQNGVITTHPITKYIMTCMSADLEVITSTWVLVGGVLAALAAYCLSVGCVVICGRITLTGKPAVVPDREILYQQFDEMEECSRHIPYLAEGQQIAEQFRQKVLGLLQASAKQAEELKPAVHSAWPRVEDFWRKHMWNFVSGIQYLAGLSTLPGNPAVASLMSFTASLTSPLRTSQTLLLNILGGWIAAQVAPPPASTAFVVSGLAGAAVGSIRLGRVLVDVLAGYGAGVSGALVAFKIMSGECPSTEDMVNLLPALLSPGVALVGVVCAAILRRHVGPAEGANQWMNRLIAFASRGNHVSPTHYVPETDASKNVTQILTSLTITSLLRRLHQWVNEDTATPCATSWLRDVWDWVCTVLSDFKVWLQAKLFPRLPGIPFLSCQAGYRGVWAGDGVCHTTCTCGAVIAGHVKNGTMKITGPKTCSNTWHGTFPINATTTGPSTPRPAPNYQRALWRVSAEDYVEVRRLGDCHYVVGVTAEGLKCPCQVPAPEFFTEVDGVRIHRYAPPCKPLLRDEVTFSVGLSNYAVGSQLPCEPEPDVTVVTSMLTDPTHITAETAARRLKKGSPPSLASSSANQLSAPSLRATCTTSQKHPEMELLQANLLWKHEMGSHIPRVQSENKVVVLDSFELYPLEYEEREISVSVECHRQPRCKFPPVFPVWARPDNNPPFIQAWQMPGYEPPVVSGCAVAPPKPAPVPPPRRKRLVHLDESTVSHALAQLADKVFVESSNDPGPSSDSGLSITSPVPPDPTTPEDAGSEAESYSSMPPLEGEPGDPDLSSGSWSTVSDEDDVVCCSMSYSWTGALITPCAAEEEKLPINPLSNSLVRHHNMVYSTTSRSASLRQKKVTFDRVQVFDQHYQDVLKEIKLRASTVQAKLLSIEEACDLTPSHSARSKYGYGAQDVRSRASKAVDHIPSVWEGLLEDSDTPIPTTIMAKNEVFCVDPSKGGRKPARLIVYPDLGVRVCEKMALYDVTQKLPQAVMGPAYGFQYSPNQRVEYLLKMWRSKKVPMGFSYDTRCFDSTVTERDIRTENDIYQSCQLDPVARRVVSSLTERLYVGGPMANSKGQSCGYRRCRASGVLPTSMGNTLTCYLKAQAACRAANIKDCDMLVCGDDLVVICESAGVQEDTASLRAFTDAMTRYSAPPGDAPQPTYDLELITSCSSNVSVAHEGNGKKYYYLTRDCTTPLARAAWETARHTPVNSWLGNIIMFAPTIWVRMVLMNHFFSILQSQEQLEKAFDFDIYGVTYSVSPLDLPAIIQRLHGMAAFSLHGYSPVELNRVGACLRKLGVLPSRAWRHRARAVRAKLIAQGGKAAICGKYLFNWAVKTKLKLTPLVSASKLDLSGWFVAGYDGGDIYHSVSQARPRFLLLGLLLLTVGVGIFLLPAR</sequence>
<accession>O39927</accession>
<evidence type="ECO:0000250" key="1">
    <source>
        <dbReference type="UniProtKB" id="O92972"/>
    </source>
</evidence>
<evidence type="ECO:0000250" key="2">
    <source>
        <dbReference type="UniProtKB" id="P26662"/>
    </source>
</evidence>
<evidence type="ECO:0000250" key="3">
    <source>
        <dbReference type="UniProtKB" id="P26663"/>
    </source>
</evidence>
<evidence type="ECO:0000250" key="4">
    <source>
        <dbReference type="UniProtKB" id="P26664"/>
    </source>
</evidence>
<evidence type="ECO:0000250" key="5">
    <source>
        <dbReference type="UniProtKB" id="P27958"/>
    </source>
</evidence>
<evidence type="ECO:0000250" key="6">
    <source>
        <dbReference type="UniProtKB" id="P29846"/>
    </source>
</evidence>
<evidence type="ECO:0000250" key="7">
    <source>
        <dbReference type="UniProtKB" id="Q01403"/>
    </source>
</evidence>
<evidence type="ECO:0000250" key="8">
    <source>
        <dbReference type="UniProtKB" id="Q03463"/>
    </source>
</evidence>
<evidence type="ECO:0000250" key="9">
    <source>
        <dbReference type="UniProtKB" id="Q5EG65"/>
    </source>
</evidence>
<evidence type="ECO:0000250" key="10">
    <source>
        <dbReference type="UniProtKB" id="Q913V3"/>
    </source>
</evidence>
<evidence type="ECO:0000250" key="11">
    <source>
        <dbReference type="UniProtKB" id="Q99IB8"/>
    </source>
</evidence>
<evidence type="ECO:0000250" key="12">
    <source>
        <dbReference type="UniProtKB" id="Q9WMX2"/>
    </source>
</evidence>
<evidence type="ECO:0000255" key="13"/>
<evidence type="ECO:0000255" key="14">
    <source>
        <dbReference type="PROSITE-ProRule" id="PRU00539"/>
    </source>
</evidence>
<evidence type="ECO:0000255" key="15">
    <source>
        <dbReference type="PROSITE-ProRule" id="PRU00541"/>
    </source>
</evidence>
<evidence type="ECO:0000255" key="16">
    <source>
        <dbReference type="PROSITE-ProRule" id="PRU01030"/>
    </source>
</evidence>
<evidence type="ECO:0000255" key="17">
    <source>
        <dbReference type="PROSITE-ProRule" id="PRU01166"/>
    </source>
</evidence>
<evidence type="ECO:0000256" key="18">
    <source>
        <dbReference type="SAM" id="MobiDB-lite"/>
    </source>
</evidence>
<evidence type="ECO:0000305" key="19"/>
<proteinExistence type="inferred from homology"/>
<name>POLG_HCVEU</name>
<organism>
    <name type="scientific">Hepatitis C virus genotype 6a (isolate EUHK2)</name>
    <name type="common">HCV</name>
    <dbReference type="NCBI Taxonomy" id="356420"/>
    <lineage>
        <taxon>Viruses</taxon>
        <taxon>Riboviria</taxon>
        <taxon>Orthornavirae</taxon>
        <taxon>Kitrinoviricota</taxon>
        <taxon>Flasuviricetes</taxon>
        <taxon>Amarillovirales</taxon>
        <taxon>Flaviviridae</taxon>
        <taxon>Hepacivirus</taxon>
        <taxon>Hepacivirus hominis</taxon>
    </lineage>
</organism>
<feature type="initiator methionine" description="Removed; by host" evidence="4">
    <location>
        <position position="1"/>
    </location>
</feature>
<feature type="chain" id="PRO_0000450901" description="Genome polyprotein">
    <location>
        <begin position="2"/>
        <end position="3018"/>
    </location>
</feature>
<feature type="chain" id="PRO_0000045544" description="Core protein precursor" evidence="13">
    <location>
        <begin position="2"/>
        <end position="191"/>
    </location>
</feature>
<feature type="chain" id="PRO_0000045545" description="Mature core protein">
    <location>
        <begin position="2"/>
        <end position="177"/>
    </location>
</feature>
<feature type="propeptide" id="PRO_0000045546" description="ER anchor for the core protein, removed in mature form by host signal peptidase">
    <location>
        <begin position="178"/>
        <end position="191"/>
    </location>
</feature>
<feature type="chain" id="PRO_0000045547" description="Envelope glycoprotein E1">
    <location>
        <begin position="192"/>
        <end position="383"/>
    </location>
</feature>
<feature type="chain" id="PRO_0000045548" description="Envelope glycoprotein E2">
    <location>
        <begin position="384"/>
        <end position="750"/>
    </location>
</feature>
<feature type="chain" id="PRO_0000045549" description="Viroporin p7">
    <location>
        <begin position="751"/>
        <end position="813"/>
    </location>
</feature>
<feature type="chain" id="PRO_0000045550" description="Protease NS2" evidence="16">
    <location>
        <begin position="814"/>
        <end position="1030"/>
    </location>
</feature>
<feature type="chain" id="PRO_0000045551" description="Serine protease/helicase NS3">
    <location>
        <begin position="1031"/>
        <end position="1661"/>
    </location>
</feature>
<feature type="chain" id="PRO_0000045552" description="Non-structural protein 4A">
    <location>
        <begin position="1662"/>
        <end position="1715"/>
    </location>
</feature>
<feature type="chain" id="PRO_0000045553" description="Non-structural protein 4B">
    <location>
        <begin position="1716"/>
        <end position="1976"/>
    </location>
</feature>
<feature type="chain" id="PRO_0000045554" description="Non-structural protein 5A">
    <location>
        <begin position="1977"/>
        <end position="2427"/>
    </location>
</feature>
<feature type="chain" id="PRO_0000045555" description="RNA-directed RNA polymerase">
    <location>
        <begin position="2428"/>
        <end position="3018"/>
    </location>
</feature>
<feature type="topological domain" description="Cytoplasmic" evidence="13">
    <location>
        <begin position="2"/>
        <end position="168"/>
    </location>
</feature>
<feature type="transmembrane region" description="Helical" evidence="13">
    <location>
        <begin position="169"/>
        <end position="189"/>
    </location>
</feature>
<feature type="topological domain" description="Lumenal" evidence="5">
    <location>
        <begin position="190"/>
        <end position="358"/>
    </location>
</feature>
<feature type="transmembrane region" description="Helical" evidence="5">
    <location>
        <begin position="359"/>
        <end position="379"/>
    </location>
</feature>
<feature type="topological domain" description="Lumenal" evidence="5">
    <location>
        <begin position="380"/>
        <end position="729"/>
    </location>
</feature>
<feature type="transmembrane region" description="Helical" evidence="5">
    <location>
        <begin position="730"/>
        <end position="750"/>
    </location>
</feature>
<feature type="topological domain" description="Lumenal" evidence="5">
    <location>
        <begin position="751"/>
        <end position="761"/>
    </location>
</feature>
<feature type="transmembrane region" description="Helical" evidence="5">
    <location>
        <begin position="762"/>
        <end position="782"/>
    </location>
</feature>
<feature type="topological domain" description="Cytoplasmic" evidence="5">
    <location>
        <begin position="783"/>
        <end position="786"/>
    </location>
</feature>
<feature type="transmembrane region" description="Helical" evidence="5">
    <location>
        <begin position="787"/>
        <end position="807"/>
    </location>
</feature>
<feature type="topological domain" description="Lumenal" evidence="5">
    <location>
        <begin position="808"/>
        <end position="817"/>
    </location>
</feature>
<feature type="transmembrane region" description="Helical" evidence="13">
    <location>
        <begin position="818"/>
        <end position="838"/>
    </location>
</feature>
<feature type="topological domain" description="Cytoplasmic" evidence="12">
    <location>
        <begin position="839"/>
        <end position="885"/>
    </location>
</feature>
<feature type="transmembrane region" description="Helical" evidence="12">
    <location>
        <begin position="886"/>
        <end position="906"/>
    </location>
</feature>
<feature type="topological domain" description="Lumenal" evidence="12">
    <location>
        <begin position="907"/>
        <end position="932"/>
    </location>
</feature>
<feature type="transmembrane region" description="Helical" evidence="12">
    <location>
        <begin position="933"/>
        <end position="953"/>
    </location>
</feature>
<feature type="topological domain" description="Cytoplasmic" evidence="12">
    <location>
        <begin position="954"/>
        <end position="1661"/>
    </location>
</feature>
<feature type="transmembrane region" description="Helical" evidence="13">
    <location>
        <begin position="1662"/>
        <end position="1682"/>
    </location>
</feature>
<feature type="topological domain" description="Cytoplasmic" evidence="13">
    <location>
        <begin position="1683"/>
        <end position="1809"/>
    </location>
</feature>
<feature type="transmembrane region" description="Helical" evidence="13">
    <location>
        <begin position="1810"/>
        <end position="1830"/>
    </location>
</feature>
<feature type="topological domain" description="Lumenal" evidence="5">
    <location>
        <begin position="1831"/>
        <end position="1832"/>
    </location>
</feature>
<feature type="transmembrane region" description="Helical" evidence="13">
    <location>
        <begin position="1833"/>
        <end position="1853"/>
    </location>
</feature>
<feature type="topological domain" description="Cytoplasmic" evidence="13">
    <location>
        <position position="1854"/>
    </location>
</feature>
<feature type="transmembrane region" description="Helical" evidence="13">
    <location>
        <begin position="1855"/>
        <end position="1875"/>
    </location>
</feature>
<feature type="topological domain" description="Lumenal" evidence="13">
    <location>
        <begin position="1876"/>
        <end position="1885"/>
    </location>
</feature>
<feature type="transmembrane region" description="Helical" evidence="13">
    <location>
        <begin position="1886"/>
        <end position="1906"/>
    </location>
</feature>
<feature type="topological domain" description="Cytoplasmic" evidence="13">
    <location>
        <begin position="1907"/>
        <end position="1976"/>
    </location>
</feature>
<feature type="intramembrane region" evidence="5">
    <location>
        <begin position="1977"/>
        <end position="2006"/>
    </location>
</feature>
<feature type="topological domain" description="Cytoplasmic" evidence="5">
    <location>
        <begin position="2007"/>
        <end position="2997"/>
    </location>
</feature>
<feature type="transmembrane region" description="Helical" evidence="5">
    <location>
        <begin position="2998"/>
        <end position="3018"/>
    </location>
</feature>
<feature type="domain" description="Peptidase C18" evidence="16">
    <location>
        <begin position="907"/>
        <end position="1030"/>
    </location>
</feature>
<feature type="domain" description="Peptidase S29" evidence="17">
    <location>
        <begin position="1031"/>
        <end position="1212"/>
    </location>
</feature>
<feature type="domain" description="RdRp catalytic" evidence="14">
    <location>
        <begin position="2641"/>
        <end position="2759"/>
    </location>
</feature>
<feature type="region of interest" description="Disordered" evidence="5">
    <location>
        <begin position="2"/>
        <end position="75"/>
    </location>
</feature>
<feature type="region of interest" description="Interaction with DDX3X" evidence="9">
    <location>
        <begin position="2"/>
        <end position="59"/>
    </location>
</feature>
<feature type="region of interest" description="Interaction with EIF2AK2/PKR" evidence="2">
    <location>
        <begin position="2"/>
        <end position="58"/>
    </location>
</feature>
<feature type="region of interest" description="Interaction with STAT1" evidence="2">
    <location>
        <begin position="2"/>
        <end position="23"/>
    </location>
</feature>
<feature type="region of interest" description="Important for endoplasmic reticulum and mitochondrial localization" evidence="2">
    <location>
        <begin position="112"/>
        <end position="152"/>
    </location>
</feature>
<feature type="region of interest" description="Interaction with APOA2" evidence="6">
    <location>
        <begin position="122"/>
        <end position="173"/>
    </location>
</feature>
<feature type="region of interest" description="Important for lipid droplets localization" evidence="5">
    <location>
        <begin position="164"/>
        <end position="167"/>
    </location>
</feature>
<feature type="region of interest" description="Important for fusion" evidence="5">
    <location>
        <begin position="265"/>
        <end position="296"/>
    </location>
</feature>
<feature type="region of interest" description="HVR1" evidence="5">
    <location>
        <begin position="385"/>
        <end position="411"/>
    </location>
</feature>
<feature type="region of interest" description="HVR2" evidence="5">
    <location>
        <begin position="474"/>
        <end position="478"/>
    </location>
</feature>
<feature type="region of interest" description="CD81-binding 1" evidence="3">
    <location>
        <begin position="480"/>
        <end position="493"/>
    </location>
</feature>
<feature type="region of interest" description="CD81-binding 2" evidence="3">
    <location>
        <begin position="544"/>
        <end position="551"/>
    </location>
</feature>
<feature type="region of interest" description="PKR/eIF2-alpha phosphorylation homology domain (PePHD)">
    <location>
        <begin position="664"/>
        <end position="675"/>
    </location>
</feature>
<feature type="region of interest" description="Protease NS2-3" evidence="3">
    <location>
        <begin position="908"/>
        <end position="1210"/>
    </location>
</feature>
<feature type="region of interest" description="Interaction with host SCPS1" evidence="11">
    <location>
        <begin position="933"/>
        <end position="953"/>
    </location>
</feature>
<feature type="region of interest" description="RNA-binding" evidence="3">
    <location>
        <begin position="1490"/>
        <end position="1502"/>
    </location>
</feature>
<feature type="region of interest" description="NS3-binding" evidence="5">
    <location>
        <begin position="1683"/>
        <end position="1694"/>
    </location>
</feature>
<feature type="region of interest" description="Transcriptional activation" evidence="13">
    <location>
        <begin position="2124"/>
        <end position="2337"/>
    </location>
</feature>
<feature type="region of interest" description="FKBP8-binding" evidence="2">
    <location>
        <begin position="2124"/>
        <end position="2212"/>
    </location>
</feature>
<feature type="region of interest" description="Interaction with non-structural protein 4A" evidence="2">
    <location>
        <begin position="2139"/>
        <end position="2143"/>
    </location>
</feature>
<feature type="region of interest" description="Disordered" evidence="18">
    <location>
        <begin position="2192"/>
        <end position="2215"/>
    </location>
</feature>
<feature type="region of interest" description="Interaction with host SKP2" evidence="5">
    <location>
        <begin position="2193"/>
        <end position="2445"/>
    </location>
</feature>
<feature type="region of interest" description="Interaction with EIF2AK2/PKR" evidence="3">
    <location>
        <begin position="2214"/>
        <end position="2279"/>
    </location>
</feature>
<feature type="region of interest" description="ISDR" evidence="2">
    <location>
        <begin position="2214"/>
        <end position="2253"/>
    </location>
</feature>
<feature type="region of interest" description="NS4B-binding" evidence="13">
    <location>
        <begin position="2253"/>
        <end position="2311"/>
    </location>
</feature>
<feature type="region of interest" description="V3">
    <location>
        <begin position="2304"/>
        <end position="2382"/>
    </location>
</feature>
<feature type="region of interest" description="Disordered" evidence="18">
    <location>
        <begin position="2359"/>
        <end position="2417"/>
    </location>
</feature>
<feature type="short sequence motif" description="Nuclear localization signal" evidence="11">
    <location>
        <begin position="5"/>
        <end position="13"/>
    </location>
</feature>
<feature type="short sequence motif" description="Nuclear localization signal" evidence="11">
    <location>
        <begin position="38"/>
        <end position="43"/>
    </location>
</feature>
<feature type="short sequence motif" description="Nuclear localization signal" evidence="11">
    <location>
        <begin position="58"/>
        <end position="64"/>
    </location>
</feature>
<feature type="short sequence motif" description="Nuclear localization signal" evidence="11">
    <location>
        <begin position="66"/>
        <end position="71"/>
    </location>
</feature>
<feature type="short sequence motif" description="DECH box" evidence="11">
    <location>
        <begin position="1320"/>
        <end position="1323"/>
    </location>
</feature>
<feature type="short sequence motif" description="SH3-binding" evidence="13">
    <location>
        <begin position="2327"/>
        <end position="2330"/>
    </location>
</feature>
<feature type="short sequence motif" description="Nuclear localization signal" evidence="2">
    <location>
        <begin position="2332"/>
        <end position="2340"/>
    </location>
</feature>
<feature type="compositionally biased region" description="Basic residues" evidence="18">
    <location>
        <begin position="7"/>
        <end position="16"/>
    </location>
</feature>
<feature type="compositionally biased region" description="Low complexity" evidence="18">
    <location>
        <begin position="2198"/>
        <end position="2215"/>
    </location>
</feature>
<feature type="compositionally biased region" description="Low complexity" evidence="18">
    <location>
        <begin position="2360"/>
        <end position="2373"/>
    </location>
</feature>
<feature type="active site" description="For protease NS2 activity; shared with dimeric partner" evidence="16">
    <location>
        <position position="956"/>
    </location>
</feature>
<feature type="active site" description="For protease NS2 activity; shared with dimeric partner" evidence="16">
    <location>
        <position position="976"/>
    </location>
</feature>
<feature type="active site" description="For protease NS2 activity; shared with dimeric partner" evidence="16">
    <location>
        <position position="997"/>
    </location>
</feature>
<feature type="active site" description="Charge relay system; for serine protease NS3 activity" evidence="17">
    <location>
        <position position="1087"/>
    </location>
</feature>
<feature type="active site" description="Charge relay system; for serine protease NS3 activity" evidence="17">
    <location>
        <position position="1111"/>
    </location>
</feature>
<feature type="active site" description="Charge relay system; for serine protease NS3 activity" evidence="17">
    <location>
        <position position="1169"/>
    </location>
</feature>
<feature type="binding site" evidence="17">
    <location>
        <position position="1127"/>
    </location>
    <ligand>
        <name>Zn(2+)</name>
        <dbReference type="ChEBI" id="CHEBI:29105"/>
        <label>1</label>
        <note>structural; for NS3 protease activity and NS2/3 auto-cleavage activity</note>
    </ligand>
</feature>
<feature type="binding site" evidence="17">
    <location>
        <position position="1129"/>
    </location>
    <ligand>
        <name>Zn(2+)</name>
        <dbReference type="ChEBI" id="CHEBI:29105"/>
        <label>1</label>
        <note>structural; for NS3 protease activity and NS2/3 auto-cleavage activity</note>
    </ligand>
</feature>
<feature type="binding site" evidence="17">
    <location>
        <position position="1175"/>
    </location>
    <ligand>
        <name>Zn(2+)</name>
        <dbReference type="ChEBI" id="CHEBI:29105"/>
        <label>1</label>
        <note>structural; for NS3 protease activity and NS2/3 auto-cleavage activity</note>
    </ligand>
</feature>
<feature type="binding site" evidence="17">
    <location>
        <position position="1179"/>
    </location>
    <ligand>
        <name>Zn(2+)</name>
        <dbReference type="ChEBI" id="CHEBI:29105"/>
        <label>1</label>
        <note>structural; for NS3 protease activity and NS2/3 auto-cleavage activity</note>
    </ligand>
</feature>
<feature type="binding site" evidence="15">
    <location>
        <begin position="1234"/>
        <end position="1241"/>
    </location>
    <ligand>
        <name>ATP</name>
        <dbReference type="ChEBI" id="CHEBI:30616"/>
    </ligand>
</feature>
<feature type="binding site" evidence="12">
    <location>
        <position position="1241"/>
    </location>
    <ligand>
        <name>Mg(2+)</name>
        <dbReference type="ChEBI" id="CHEBI:18420"/>
        <label>1</label>
        <note>catalytic; for NS3 helicase activity</note>
    </ligand>
</feature>
<feature type="binding site" evidence="12">
    <location>
        <position position="1321"/>
    </location>
    <ligand>
        <name>Mg(2+)</name>
        <dbReference type="ChEBI" id="CHEBI:18420"/>
        <label>1</label>
        <note>catalytic; for NS3 helicase activity</note>
    </ligand>
</feature>
<feature type="binding site" evidence="12">
    <location>
        <position position="2015"/>
    </location>
    <ligand>
        <name>Zn(2+)</name>
        <dbReference type="ChEBI" id="CHEBI:29105"/>
        <label>2</label>
        <note>structural</note>
    </ligand>
</feature>
<feature type="binding site" evidence="12">
    <location>
        <position position="2033"/>
    </location>
    <ligand>
        <name>Zn(2+)</name>
        <dbReference type="ChEBI" id="CHEBI:29105"/>
        <label>2</label>
        <note>structural</note>
    </ligand>
</feature>
<feature type="binding site" evidence="12">
    <location>
        <position position="2035"/>
    </location>
    <ligand>
        <name>Zn(2+)</name>
        <dbReference type="ChEBI" id="CHEBI:29105"/>
        <label>2</label>
        <note>structural</note>
    </ligand>
</feature>
<feature type="binding site" evidence="12">
    <location>
        <position position="2056"/>
    </location>
    <ligand>
        <name>Zn(2+)</name>
        <dbReference type="ChEBI" id="CHEBI:29105"/>
        <label>2</label>
        <note>structural</note>
    </ligand>
</feature>
<feature type="binding site" evidence="3">
    <location>
        <position position="2647"/>
    </location>
    <ligand>
        <name>Mg(2+)</name>
        <dbReference type="ChEBI" id="CHEBI:18420"/>
        <label>2</label>
        <note>catalytic; for RNA-directed RNA polymerase activity</note>
    </ligand>
</feature>
<feature type="binding site" evidence="3">
    <location>
        <position position="2745"/>
    </location>
    <ligand>
        <name>Mg(2+)</name>
        <dbReference type="ChEBI" id="CHEBI:18420"/>
        <label>2</label>
        <note>catalytic; for RNA-directed RNA polymerase activity</note>
    </ligand>
</feature>
<feature type="binding site" evidence="3">
    <location>
        <position position="2746"/>
    </location>
    <ligand>
        <name>Mg(2+)</name>
        <dbReference type="ChEBI" id="CHEBI:18420"/>
        <label>2</label>
        <note>catalytic; for RNA-directed RNA polymerase activity</note>
    </ligand>
</feature>
<feature type="site" description="Cleavage; by host signal peptide peptidase" evidence="2">
    <location>
        <begin position="177"/>
        <end position="178"/>
    </location>
</feature>
<feature type="site" description="Cleavage; by host signal peptidase" evidence="2">
    <location>
        <begin position="191"/>
        <end position="192"/>
    </location>
</feature>
<feature type="site" description="Cleavage; by host signal peptidase" evidence="2">
    <location>
        <begin position="383"/>
        <end position="384"/>
    </location>
</feature>
<feature type="site" description="Cleavage; by host signal peptidase">
    <location>
        <begin position="750"/>
        <end position="751"/>
    </location>
</feature>
<feature type="site" description="Cleavage; by host signal peptidase">
    <location>
        <begin position="813"/>
        <end position="814"/>
    </location>
</feature>
<feature type="site" description="Cleavage; by protease NS2" evidence="16">
    <location>
        <begin position="1030"/>
        <end position="1031"/>
    </location>
</feature>
<feature type="site" description="Cleavage; by serine protease NS3" evidence="5">
    <location>
        <begin position="1661"/>
        <end position="1662"/>
    </location>
</feature>
<feature type="site" description="Cleavage; by serine protease NS3" evidence="5">
    <location>
        <begin position="1715"/>
        <end position="1716"/>
    </location>
</feature>
<feature type="site" description="Cleavage; by serine protease NS3" evidence="5">
    <location>
        <begin position="1976"/>
        <end position="1977"/>
    </location>
</feature>
<feature type="site" description="Cleavage; by serine protease NS3" evidence="5">
    <location>
        <begin position="2427"/>
        <end position="2428"/>
    </location>
</feature>
<feature type="modified residue" description="N-acetylserine; by host" evidence="10">
    <location>
        <position position="2"/>
    </location>
</feature>
<feature type="modified residue" description="Phosphoserine; by host" evidence="7">
    <location>
        <position position="53"/>
    </location>
</feature>
<feature type="modified residue" description="Phosphoserine; by host" evidence="7">
    <location>
        <position position="99"/>
    </location>
</feature>
<feature type="modified residue" description="Phosphoserine; by host" evidence="7">
    <location>
        <position position="116"/>
    </location>
</feature>
<feature type="modified residue" description="Phosphoserine; by host" evidence="12">
    <location>
        <position position="2198"/>
    </location>
</feature>
<feature type="modified residue" description="Phosphoserine; by host" evidence="12">
    <location>
        <position position="2201"/>
    </location>
</feature>
<feature type="modified residue" description="Phosphoserine; by host" evidence="12">
    <location>
        <position position="2205"/>
    </location>
</feature>
<feature type="modified residue" description="Phosphoserine; by host" evidence="11">
    <location>
        <position position="2211"/>
    </location>
</feature>
<feature type="modified residue" description="Phosphoserine; by host" evidence="11">
    <location>
        <position position="2214"/>
    </location>
</feature>
<feature type="modified residue" description="Phosphoserine; by host" evidence="2">
    <location>
        <position position="2456"/>
    </location>
</feature>
<feature type="modified residue" description="Phosphoserine; by host" evidence="2">
    <location>
        <position position="2469"/>
    </location>
</feature>
<feature type="lipid moiety-binding region" description="S-palmitoyl cysteine; by host" evidence="5">
    <location>
        <position position="926"/>
    </location>
</feature>
<feature type="lipid moiety-binding region" description="S-palmitoyl cysteine; by host" evidence="5">
    <location>
        <position position="1976"/>
    </location>
</feature>
<feature type="glycosylation site" description="N-linked (GlcNAc...) asparagine; by host" evidence="5">
    <location>
        <position position="196"/>
    </location>
</feature>
<feature type="glycosylation site" description="N-linked (GlcNAc...) asparagine; by host" evidence="5">
    <location>
        <position position="209"/>
    </location>
</feature>
<feature type="glycosylation site" description="N-linked (GlcNAc...) asparagine; by host" evidence="5">
    <location>
        <position position="234"/>
    </location>
</feature>
<feature type="glycosylation site" description="N-linked (GlcNAc...) asparagine; by host" evidence="13">
    <location>
        <position position="250"/>
    </location>
</feature>
<feature type="glycosylation site" description="N-linked (GlcNAc...) asparagine; by host" evidence="5">
    <location>
        <position position="305"/>
    </location>
</feature>
<feature type="glycosylation site" description="N-linked (GlcNAc...) (high mannose) asparagine; by host" evidence="5">
    <location>
        <position position="416"/>
    </location>
</feature>
<feature type="glycosylation site" description="N-linked (GlcNAc...) (high mannose) asparagine; by host" evidence="5">
    <location>
        <position position="422"/>
    </location>
</feature>
<feature type="glycosylation site" description="N-linked (GlcNAc...) (high mannose) asparagine; by host" evidence="5">
    <location>
        <position position="429"/>
    </location>
</feature>
<feature type="glycosylation site" description="N-linked (GlcNAc...) asparagine; by host" evidence="13">
    <location>
        <position position="447"/>
    </location>
</feature>
<feature type="glycosylation site" description="N-linked (GlcNAc...) asparagine; by host" evidence="13">
    <location>
        <position position="475"/>
    </location>
</feature>
<feature type="glycosylation site" description="N-linked (GlcNAc...) asparagine; by host" evidence="13">
    <location>
        <position position="532"/>
    </location>
</feature>
<feature type="glycosylation site" description="N-linked (GlcNAc...) asparagine; by host" evidence="13">
    <location>
        <position position="556"/>
    </location>
</feature>
<feature type="glycosylation site" description="N-linked (GlcNAc...) asparagine; by host" evidence="13">
    <location>
        <position position="577"/>
    </location>
</feature>
<feature type="glycosylation site" description="N-linked (GlcNAc...) (high mannose) asparagine; by host" evidence="5">
    <location>
        <position position="627"/>
    </location>
</feature>
<feature type="glycosylation site" description="N-linked (GlcNAc...) (high mannose) asparagine; by host" evidence="5">
    <location>
        <position position="649"/>
    </location>
</feature>
<feature type="disulfide bond" evidence="5">
    <location>
        <begin position="428"/>
        <end position="552"/>
    </location>
</feature>
<feature type="disulfide bond" evidence="5">
    <location>
        <begin position="451"/>
        <end position="458"/>
    </location>
</feature>
<feature type="disulfide bond" evidence="5">
    <location>
        <begin position="486"/>
        <end position="494"/>
    </location>
</feature>
<feature type="disulfide bond" evidence="5">
    <location>
        <begin position="503"/>
        <end position="508"/>
    </location>
</feature>
<feature type="disulfide bond" evidence="5">
    <location>
        <begin position="564"/>
        <end position="569"/>
    </location>
</feature>
<feature type="disulfide bond" evidence="5">
    <location>
        <begin position="585"/>
        <end position="589"/>
    </location>
</feature>
<feature type="disulfide bond" evidence="5">
    <location>
        <begin position="601"/>
        <end position="624"/>
    </location>
</feature>
<feature type="disulfide bond" evidence="5">
    <location>
        <begin position="611"/>
        <end position="648"/>
    </location>
</feature>
<feature type="disulfide bond" evidence="5">
    <location>
        <begin position="656"/>
        <end position="681"/>
    </location>
</feature>
<feature type="cross-link" description="Glycyl lysine isopeptide (Lys-Gly) (interchain with G-Cter in ubiquitin)" evidence="5">
    <location>
        <position position="2355"/>
    </location>
</feature>
<reference key="1">
    <citation type="journal article" date="1997" name="Biochem. Biophys. Res. Commun.">
        <title>Complete coding sequence of hepatitis C virus genotype 6a.</title>
        <authorList>
            <person name="Adams A."/>
            <person name="Chamberlain R.W."/>
            <person name="Taylor L.A."/>
            <person name="Davidson F."/>
            <person name="Lin C.K."/>
            <person name="Simmonds P."/>
            <person name="Elliot R.M."/>
        </authorList>
    </citation>
    <scope>NUCLEOTIDE SEQUENCE [GENOMIC RNA]</scope>
</reference>
<reference key="2">
    <citation type="journal article" date="2000" name="J. Viral Hepat.">
        <title>Properties of the hepatitis C virus core protein: a structural protein that modulates cellular processes.</title>
        <authorList>
            <person name="McLauchlan J."/>
        </authorList>
    </citation>
    <scope>REVIEW</scope>
</reference>
<reference key="3">
    <citation type="journal article" date="2004" name="Hepatology">
        <title>Structural biology of hepatitis C virus.</title>
        <authorList>
            <person name="Penin F."/>
            <person name="Dubuisson J."/>
            <person name="Rey F.A."/>
            <person name="Moradpour D."/>
            <person name="Pawlotsky J.-M."/>
        </authorList>
    </citation>
    <scope>REVIEW</scope>
</reference>
<organismHost>
    <name type="scientific">Homo sapiens</name>
    <name type="common">Human</name>
    <dbReference type="NCBI Taxonomy" id="9606"/>
</organismHost>
<protein>
    <recommendedName>
        <fullName>Genome polyprotein</fullName>
    </recommendedName>
    <component>
        <recommendedName>
            <fullName>Core protein precursor</fullName>
        </recommendedName>
        <alternativeName>
            <fullName>Capsid protein C</fullName>
        </alternativeName>
        <alternativeName>
            <fullName>p23</fullName>
        </alternativeName>
    </component>
    <component>
        <recommendedName>
            <fullName>Mature core protein</fullName>
        </recommendedName>
        <alternativeName>
            <fullName>p21</fullName>
        </alternativeName>
    </component>
    <component>
        <recommendedName>
            <fullName>Envelope glycoprotein E1</fullName>
        </recommendedName>
        <alternativeName>
            <fullName>gp32</fullName>
        </alternativeName>
        <alternativeName>
            <fullName>gp35</fullName>
        </alternativeName>
    </component>
    <component>
        <recommendedName>
            <fullName>Envelope glycoprotein E2</fullName>
        </recommendedName>
        <alternativeName>
            <fullName>NS1</fullName>
        </alternativeName>
        <alternativeName>
            <fullName>gp68</fullName>
        </alternativeName>
        <alternativeName>
            <fullName>gp70</fullName>
        </alternativeName>
    </component>
    <component>
        <recommendedName>
            <fullName>Viroporin p7</fullName>
        </recommendedName>
    </component>
    <component>
        <recommendedName>
            <fullName>Protease NS2</fullName>
            <shortName>p23</shortName>
            <ecNumber evidence="3">3.4.22.-</ecNumber>
        </recommendedName>
        <alternativeName>
            <fullName>Non-structural protein 2</fullName>
            <shortName>NS2</shortName>
        </alternativeName>
    </component>
    <component>
        <recommendedName>
            <fullName>Serine protease/helicase NS3</fullName>
            <ecNumber evidence="5">3.4.21.98</ecNumber>
            <ecNumber evidence="5">3.6.1.15</ecNumber>
            <ecNumber evidence="5">3.6.4.13</ecNumber>
        </recommendedName>
        <alternativeName>
            <fullName>Hepacivirin</fullName>
        </alternativeName>
        <alternativeName>
            <fullName evidence="5">NS3 helicase</fullName>
        </alternativeName>
        <alternativeName>
            <fullName evidence="5">NS3 protease</fullName>
        </alternativeName>
        <alternativeName>
            <fullName>NS3P</fullName>
        </alternativeName>
        <alternativeName>
            <fullName>Viroporin p70</fullName>
        </alternativeName>
    </component>
    <component>
        <recommendedName>
            <fullName>Non-structural protein 4A</fullName>
            <shortName>NS4A</shortName>
        </recommendedName>
        <alternativeName>
            <fullName>p8</fullName>
        </alternativeName>
    </component>
    <component>
        <recommendedName>
            <fullName>Non-structural protein 4B</fullName>
            <shortName>NS4B</shortName>
        </recommendedName>
        <alternativeName>
            <fullName>p27</fullName>
        </alternativeName>
    </component>
    <component>
        <recommendedName>
            <fullName>Non-structural protein 5A</fullName>
            <shortName>NS5A</shortName>
        </recommendedName>
        <alternativeName>
            <fullName>p56/58</fullName>
        </alternativeName>
    </component>
    <component>
        <recommendedName>
            <fullName>RNA-directed RNA polymerase</fullName>
            <ecNumber evidence="5">2.7.7.48</ecNumber>
        </recommendedName>
        <alternativeName>
            <fullName>NS5B</fullName>
        </alternativeName>
        <alternativeName>
            <fullName>p68</fullName>
        </alternativeName>
    </component>
</protein>